<keyword id="KW-0002">3D-structure</keyword>
<keyword id="KW-1064">Adaptive immunity</keyword>
<keyword id="KW-0025">Alternative splicing</keyword>
<keyword id="KW-0067">ATP-binding</keyword>
<keyword id="KW-1003">Cell membrane</keyword>
<keyword id="KW-0963">Cytoplasm</keyword>
<keyword id="KW-0333">Golgi apparatus</keyword>
<keyword id="KW-0391">Immunity</keyword>
<keyword id="KW-0395">Inflammatory response</keyword>
<keyword id="KW-0399">Innate immunity</keyword>
<keyword id="KW-0418">Kinase</keyword>
<keyword id="KW-0449">Lipoprotein</keyword>
<keyword id="KW-0472">Membrane</keyword>
<keyword id="KW-0519">Myristate</keyword>
<keyword id="KW-0547">Nucleotide-binding</keyword>
<keyword id="KW-0539">Nucleus</keyword>
<keyword id="KW-0564">Palmitate</keyword>
<keyword id="KW-0597">Phosphoprotein</keyword>
<keyword id="KW-0656">Proto-oncogene</keyword>
<keyword id="KW-1185">Reference proteome</keyword>
<keyword id="KW-0727">SH2 domain</keyword>
<keyword id="KW-0728">SH3 domain</keyword>
<keyword id="KW-0808">Transferase</keyword>
<keyword id="KW-0829">Tyrosine-protein kinase</keyword>
<keyword id="KW-0832">Ubl conjugation</keyword>
<accession>P25911</accession>
<accession>Q62127</accession>
<gene>
    <name type="primary">Lyn</name>
</gene>
<reference key="1">
    <citation type="journal article" date="1991" name="Mol. Cell. Biol.">
        <title>Alternatively spliced murine lyn mRNAs encode distinct proteins.</title>
        <authorList>
            <person name="Stanley E."/>
            <person name="Ralph S.J."/>
            <person name="McEwen S."/>
            <person name="Boulet I."/>
            <person name="Holtzman D.A."/>
            <person name="Lock P."/>
            <person name="Dunn A.R."/>
        </authorList>
    </citation>
    <scope>NUCLEOTIDE SEQUENCE [MRNA] (ISOFORM 1)</scope>
    <scope>ALTERNATIVE SPLICING</scope>
</reference>
<reference key="2">
    <citation type="journal article" date="1991" name="Mol. Cell. Biol.">
        <title>Hematopoietic cells express two forms of lyn kinase differing by 21 amino acids in the amino terminus.</title>
        <authorList>
            <person name="Yi T."/>
            <person name="Bolen J.B."/>
            <person name="Ihle J.N."/>
        </authorList>
    </citation>
    <scope>NUCLEOTIDE SEQUENCE [MRNA] (ISOFORMS 1 AND 2)</scope>
    <scope>CATALYTIC ACTIVITY</scope>
    <scope>AUTOPHOSPHORYLATION</scope>
    <scope>TISSUE SPECIFICITY</scope>
</reference>
<reference key="3">
    <citation type="journal article" date="2004" name="Genome Res.">
        <title>The status, quality, and expansion of the NIH full-length cDNA project: the Mammalian Gene Collection (MGC).</title>
        <authorList>
            <consortium name="The MGC Project Team"/>
        </authorList>
    </citation>
    <scope>NUCLEOTIDE SEQUENCE [LARGE SCALE MRNA] (ISOFORM 1)</scope>
    <source>
        <strain>Czech II</strain>
        <tissue>Mammary gland</tissue>
    </source>
</reference>
<reference key="4">
    <citation type="journal article" date="1989" name="Gene">
        <title>The application of the polymerase chain reaction to cloning members of the protein tyrosine kinase family.</title>
        <authorList>
            <person name="Wilks A.F."/>
            <person name="Kurban R.R."/>
            <person name="Hovens C.M."/>
            <person name="Ralph S.J."/>
        </authorList>
    </citation>
    <scope>NUCLEOTIDE SEQUENCE [MRNA] OF 364-432</scope>
</reference>
<reference key="5">
    <citation type="journal article" date="1991" name="Science">
        <title>Association of B cell antigen receptor with protein tyrosine kinase Lyn.</title>
        <authorList>
            <person name="Yamanashi Y."/>
            <person name="Kakiuchi T."/>
            <person name="Mizuguchi J."/>
            <person name="Yamamoto T."/>
            <person name="Toyoshima K."/>
        </authorList>
    </citation>
    <scope>INTERACTION WITH B CELL RECEPTOR</scope>
    <scope>AUTOPHOSPHORYLATION</scope>
</reference>
<reference key="6">
    <citation type="journal article" date="1994" name="EMBO J.">
        <title>Analysis of Ig-alpha-tyrosine kinase interaction reveals two levels of binding specificity and tyrosine phosphorylated Ig-alpha stimulation of Fyn activity.</title>
        <authorList>
            <person name="Clark M.R."/>
            <person name="Johnson S.A."/>
            <person name="Cambier J.C."/>
        </authorList>
    </citation>
    <scope>INTERACTION WITH CD79A</scope>
</reference>
<reference key="7">
    <citation type="journal article" date="1993" name="Curr. Biol.">
        <title>B-cell antigen receptor motifs have redundant signalling capabilities and bind the tyrosine kinases PTK72, Lyn and Fyn.</title>
        <authorList>
            <person name="Law D.A."/>
            <person name="Chan V.W."/>
            <person name="Datta S.K."/>
            <person name="DeFranco A.L."/>
        </authorList>
    </citation>
    <scope>INTERACTION WITH CD79A AND CD79B</scope>
    <scope>FUNCTION IN PHOSPHORYLATION OF CD79A AND CD79B</scope>
</reference>
<reference key="8">
    <citation type="journal article" date="1994" name="J. Exp. Med.">
        <title>Syk activation by the Src-family tyrosine kinase in the B cell receptor signaling.</title>
        <authorList>
            <person name="Kurosaki T."/>
            <person name="Takata M."/>
            <person name="Yamanashi Y."/>
            <person name="Inazu T."/>
            <person name="Taniguchi T."/>
            <person name="Yamamoto T."/>
            <person name="Yamamura H."/>
        </authorList>
    </citation>
    <scope>FUNCTION IN SYK PHOSPHORYLATION</scope>
</reference>
<reference key="9">
    <citation type="journal article" date="1994" name="Proc. Natl. Acad. Sci. U.S.A.">
        <title>Distinct p53/56lyn and p59fyn domains associate with nonphosphorylated and phosphorylated Ig-alpha.</title>
        <authorList>
            <person name="Pleiman C.M."/>
            <person name="Abrams C."/>
            <person name="Gauen L.T."/>
            <person name="Bedzyk W."/>
            <person name="Jongstra J."/>
            <person name="Shaw A.S."/>
            <person name="Cambier J.C."/>
        </authorList>
    </citation>
    <scope>INTERACTION WITH CD79A</scope>
</reference>
<reference key="10">
    <citation type="journal article" date="1994" name="Science">
        <title>Activation of phosphatidylinositol-3' kinase by Src-family kinase SH3 binding to the p85 subunit.</title>
        <authorList>
            <person name="Pleiman C.M."/>
            <person name="Hertz W.M."/>
            <person name="Cambier J.C."/>
        </authorList>
    </citation>
    <scope>FUNCTION IN PIK3R1 ACTIVATION</scope>
    <scope>INTERACTION WITH PIK3R1</scope>
</reference>
<reference key="11">
    <citation type="journal article" date="1995" name="Cell">
        <title>Multiple defects in the immune system of Lyn-deficient mice, culminating in autoimmune disease.</title>
        <authorList>
            <person name="Hibbs M.L."/>
            <person name="Tarlinton D.M."/>
            <person name="Armes J."/>
            <person name="Grail D."/>
            <person name="Hodgson G."/>
            <person name="Maglitto R."/>
            <person name="Stacker S.A."/>
            <person name="Dunn A.R."/>
        </authorList>
    </citation>
    <scope>DISRUPTION PHENOTYPE</scope>
    <scope>FUNCTION</scope>
</reference>
<reference key="12">
    <citation type="journal article" date="1995" name="Immunity">
        <title>Impaired proliferation of peripheral B cells and indication of autoimmune disease in lyn-deficient mice.</title>
        <authorList>
            <person name="Nishizumi H."/>
            <person name="Taniuchi I."/>
            <person name="Yamanashi Y."/>
            <person name="Kitamura D."/>
            <person name="Ilic D."/>
            <person name="Mori S."/>
            <person name="Watanabe T."/>
            <person name="Yamamoto T."/>
        </authorList>
    </citation>
    <scope>DISRUPTION PHENOTYPE</scope>
    <scope>FUNCTION IN B CELLS AND IN PHOSPHORYLATION OF CBL AND HCLS1</scope>
</reference>
<reference key="13">
    <citation type="journal article" date="1995" name="J. Biol. Chem.">
        <title>Tyrosine phosphorylation and translocation of the c-cbl protein after activation of tyrosine kinase signaling pathways.</title>
        <authorList>
            <person name="Tanaka S."/>
            <person name="Neff L."/>
            <person name="Baron R."/>
            <person name="Levy J.B."/>
        </authorList>
    </citation>
    <scope>INTERACTION WITH CBL</scope>
</reference>
<reference key="14">
    <citation type="journal article" date="1995" name="J. Biol. Chem.">
        <title>Autophosphorylation induces autoactivation and a decrease in the Src homology 2 domain accessibility of the Lyn protein kinase.</title>
        <authorList>
            <person name="Sotirellis N."/>
            <person name="Johnson T.M."/>
            <person name="Hibbs M.L."/>
            <person name="Stanley I.J."/>
            <person name="Stanley E."/>
            <person name="Dunn A.R."/>
            <person name="Cheng H.C."/>
        </authorList>
    </citation>
    <scope>CATALYTIC ACTIVITY</scope>
    <scope>AUTOPHOSPHORYLATION</scope>
    <scope>ACTIVITY REGULATION</scope>
</reference>
<reference key="15">
    <citation type="journal article" date="1996" name="FASEB J.">
        <title>Tec protein-tyrosine kinase is an effector molecule of Lyn protein-tyrosine kinase.</title>
        <authorList>
            <person name="Mano H."/>
            <person name="Yamashita Y."/>
            <person name="Miyazato A."/>
            <person name="Miura Y."/>
            <person name="Ozawa K."/>
        </authorList>
    </citation>
    <scope>FUNCTION IN TEC PHOSPHORYLATION</scope>
    <scope>INTERACTION WITH TEC</scope>
</reference>
<reference key="16">
    <citation type="journal article" date="1996" name="J. Exp. Med.">
        <title>Altered antigen receptor signaling and impaired Fas-mediated apoptosis of B cells in Lyn-deficient mice.</title>
        <authorList>
            <person name="Wang J."/>
            <person name="Koizumi T."/>
            <person name="Watanabe T."/>
        </authorList>
    </citation>
    <scope>DISRUPTION PHENOTYPE</scope>
    <scope>FUNCTION</scope>
</reference>
<reference key="17">
    <citation type="journal article" date="1996" name="Science">
        <title>Activation of BTK by a phosphorylation mechanism initiated by SRC family kinases.</title>
        <authorList>
            <person name="Rawlings D.J."/>
            <person name="Scharenberg A.M."/>
            <person name="Park H."/>
            <person name="Wahl M.I."/>
            <person name="Lin S."/>
            <person name="Kato R.M."/>
            <person name="Fluckiger A.C."/>
            <person name="Witte O.N."/>
            <person name="Kinet J.P."/>
        </authorList>
    </citation>
    <scope>FUNCTION IN PHOSPHORYLATION OF BTK</scope>
</reference>
<reference key="18">
    <citation type="journal article" date="1997" name="Immunity">
        <title>Characterization of the B lymphocyte populations in Lyn-deficient mice and the role of Lyn in signal initiation and down-regulation.</title>
        <authorList>
            <person name="Chan V.W."/>
            <person name="Meng F."/>
            <person name="Soriano P."/>
            <person name="DeFranco A.L."/>
            <person name="Lowell C.A."/>
        </authorList>
    </citation>
    <scope>DISRUPTION PHENOTYPE</scope>
    <scope>FUNCTION</scope>
    <scope>ALTERNATIVE SPLICING</scope>
    <scope>PHOSPHORYLATION</scope>
</reference>
<reference key="19">
    <citation type="journal article" date="1997" name="J. Immunol.">
        <title>Impaired tyrosine phosphorylation and Ca2+ mobilization, but not degranulation, in lyn-deficient bone marrow-derived mast cells.</title>
        <authorList>
            <person name="Nishizumi H."/>
            <person name="Yamamoto T."/>
        </authorList>
    </citation>
    <scope>FUNCTION IN MAST CELLS AND IN SIGNALING DOWN-STREAM OF FCER1</scope>
</reference>
<reference key="20">
    <citation type="journal article" date="1998" name="Blood">
        <title>Lyn physically associates with the erythropoietin receptor and may play a role in activation of the Stat5 pathway.</title>
        <authorList>
            <person name="Chin H."/>
            <person name="Arai A."/>
            <person name="Wakao H."/>
            <person name="Kamiyama R."/>
            <person name="Miyasaka N."/>
            <person name="Miura O."/>
        </authorList>
    </citation>
    <scope>INTERACTION WITH EPOR AND JAK2</scope>
    <scope>FUNCTION</scope>
</reference>
<reference key="21">
    <citation type="journal article" date="1998" name="Curr. Biol.">
        <title>Defective negative regulation of antigen receptor signaling in Lyn-deficient B lymphocytes.</title>
        <authorList>
            <person name="Chan V.W."/>
            <person name="Lowell C.A."/>
            <person name="DeFranco A.L."/>
        </authorList>
    </citation>
    <scope>FUNCTION IN FCGR2 AND CD22 PHOSPHORYLATION AND ACTIVATION OF MAPK1/ERK2; MAPK8/JNK1 AND MAPK9/JNK2</scope>
</reference>
<reference key="22">
    <citation type="journal article" date="1998" name="J. Exp. Med.">
        <title>Inhibition of the B cell by CD22: a requirement for Lyn.</title>
        <authorList>
            <person name="Smith K.G."/>
            <person name="Tarlinton D.M."/>
            <person name="Doody G.M."/>
            <person name="Hibbs M.L."/>
            <person name="Fearon D.T."/>
        </authorList>
    </citation>
    <scope>FUNCTION IN CD22 PHOSPHORYLATION</scope>
</reference>
<reference key="23">
    <citation type="journal article" date="1998" name="J. Exp. Med.">
        <title>A double-edged kinase Lyn: a positive and negative regulator for antigen receptor-mediated signals.</title>
        <authorList>
            <person name="Nishizumi H."/>
            <person name="Horikawa K."/>
            <person name="Mlinaric-Rascan I."/>
            <person name="Yamamoto T."/>
        </authorList>
    </citation>
    <scope>FUNCTION IN FCGR2 AND CD22 PHOSPHORYLATION</scope>
</reference>
<reference key="24">
    <citation type="journal article" date="1998" name="J. Immunol.">
        <title>Fc epsilon receptor I-associated lyn-dependent phosphorylation of Fc gamma receptor IIB during negative regulation of mast cell activation.</title>
        <authorList>
            <person name="Malbec O."/>
            <person name="Fong D.C."/>
            <person name="Turner M."/>
            <person name="Tybulewicz V.L."/>
            <person name="Cambier J.C."/>
            <person name="Fridman W.H."/>
            <person name="Daeron M."/>
        </authorList>
    </citation>
    <scope>FUNCTION IN FCGR2 PHOSPHORYLATION</scope>
    <scope>INTERACTION WITH FCGR2</scope>
</reference>
<reference key="25">
    <citation type="journal article" date="1998" name="J. Immunol.">
        <title>The B cell surface protein CD72 recruits the tyrosine phosphatase SHP-1 upon tyrosine phosphorylation.</title>
        <authorList>
            <person name="Adachi T."/>
            <person name="Flaswinkel H."/>
            <person name="Yakura H."/>
            <person name="Reth M."/>
            <person name="Tsubata T."/>
        </authorList>
    </citation>
    <scope>FUNCTION IN CD72 PHOSPHORYLATION</scope>
</reference>
<reference key="26">
    <citation type="journal article" date="1999" name="Immunology">
        <title>Regulation of B-1 cell activation and its autoantibody production by Lyn kinase-regulated signallings.</title>
        <authorList>
            <person name="Ochi H."/>
            <person name="Takeshita H."/>
            <person name="Suda T."/>
            <person name="Nisitani S."/>
            <person name="Honjo T."/>
            <person name="Watanabe T."/>
        </authorList>
    </citation>
    <scope>DISRUPTION PHENOTYPE</scope>
    <scope>FUNCTION IN ERYTHROPOIESIS</scope>
</reference>
<reference key="27">
    <citation type="journal article" date="1999" name="J. Immunol.">
        <title>CD45 negatively regulates lyn activity by dephosphorylating both positive and negative regulatory tyrosine residues in immature B cells.</title>
        <authorList>
            <person name="Katagiri T."/>
            <person name="Ogimoto M."/>
            <person name="Hasegawa K."/>
            <person name="Arimura Y."/>
            <person name="Mitomo K."/>
            <person name="Okada M."/>
            <person name="Clark M.R."/>
            <person name="Mizuno K."/>
            <person name="Yakura H."/>
        </authorList>
    </citation>
    <scope>PHOSPHORYLATION AT TYR-397 AND TYR-508</scope>
    <scope>DEPHOSPHORYLATION BY PTPRC/CD45</scope>
    <scope>ACTIVITY REGULATION</scope>
</reference>
<reference key="28">
    <citation type="journal article" date="1999" name="Oncogene">
        <title>Paired immunoglobulin-like receptor B (PIR-B) inhibits BCR-induced activation of Syk and Btk by SHP-1.</title>
        <authorList>
            <person name="Maeda A."/>
            <person name="Scharenberg A.M."/>
            <person name="Tsukada S."/>
            <person name="Bolen J.B."/>
            <person name="Kinet J.P."/>
            <person name="Kurosaki T."/>
        </authorList>
    </citation>
    <scope>FUNCTION IN PHOSPHORYLATION OF PIRB</scope>
</reference>
<reference key="29">
    <citation type="journal article" date="2000" name="Genes Cells">
        <title>Association of Lyn tyrosine kinase to the GM-CSF and IL-3 receptor common betac subunit and role of Src tyrosine kinases in DNA synthesis and anti-apoptosis.</title>
        <authorList>
            <person name="Dahl M.E."/>
            <person name="Arai K.I."/>
            <person name="Watanabe S."/>
        </authorList>
    </citation>
    <scope>FUNCTION IN PHOSPHORYLATION OF CSF2RB</scope>
    <scope>INTERACTION WITH CSF2RB</scope>
</reference>
<reference key="30">
    <citation type="journal article" date="2000" name="Genes Dev.">
        <title>Role of the rasGAP-associated docking protein p62(dok) in negative regulation of B cell receptor-mediated signaling.</title>
        <authorList>
            <person name="Yamanashi Y."/>
            <person name="Tamura T."/>
            <person name="Kanamori T."/>
            <person name="Yamane H."/>
            <person name="Nariuchi H."/>
            <person name="Yamamoto T."/>
            <person name="Baltimore D."/>
        </authorList>
    </citation>
    <scope>FUNCTION IN PHOSPHORYLATION OF DOK1</scope>
</reference>
<reference key="31">
    <citation type="journal article" date="2000" name="Int. Immunol.">
        <title>Negative regulation of B cell receptor-mediated signaling in B-1 cells through CD5 and Ly49 co-receptors via Lyn kinase activity.</title>
        <authorList>
            <person name="Ochi H."/>
            <person name="Watanabe T."/>
        </authorList>
    </citation>
    <scope>FUNCTION IN CD5 PHOSPHORYLATION</scope>
</reference>
<reference key="32">
    <citation type="journal article" date="2001" name="Blood">
        <title>Lyn is required for normal stem cell factor-induced proliferation and chemotaxis of primary hematopoietic cells.</title>
        <authorList>
            <person name="O'Laughlin-Bunner B."/>
            <person name="Radosevic N."/>
            <person name="Taylor M.L."/>
            <person name="Shivakrupa R."/>
            <person name="DeBerry C."/>
            <person name="Metcalfe D.D."/>
            <person name="Zhou M."/>
            <person name="Lowell C."/>
            <person name="Linnekin D."/>
        </authorList>
    </citation>
    <scope>FUNCTION IN REGULATION OF CELL PROLIFERATION AND MIGRATION IN RESPONSE TO KITLG</scope>
</reference>
<reference key="33">
    <citation type="journal article" date="2001" name="Immunity">
        <title>Gain- and loss-of-function Lyn mutant mice define a critical inhibitory role for Lyn in the myeloid lineage.</title>
        <authorList>
            <person name="Harder K.W."/>
            <person name="Parsons L.M."/>
            <person name="Armes J."/>
            <person name="Evans N."/>
            <person name="Kountouri N."/>
            <person name="Clark R."/>
            <person name="Quilici C."/>
            <person name="Grail D."/>
            <person name="Hodgson G.S."/>
            <person name="Dunn A.R."/>
            <person name="Hibbs M.L."/>
        </authorList>
    </citation>
    <scope>DISRUPTION PHENOTYPE</scope>
    <scope>FUNCTION IN PHOSPHORYLATION AND ACTIVATION OF SIRPA; PTPN6/SHP-1; PTPN11/SHP-2 AND INPP5D/SHIP-1</scope>
    <scope>MUTAGENESIS OF TYR-508</scope>
</reference>
<reference key="34">
    <citation type="journal article" date="2001" name="Proc. Natl. Acad. Sci. U.S.A.">
        <title>Interaction between growth arrest-DNA damage protein 34 and Src kinase Lyn negatively regulates genotoxic apoptosis.</title>
        <authorList>
            <person name="Grishin A.V."/>
            <person name="Azhipa O."/>
            <person name="Semenov I."/>
            <person name="Corey S.J."/>
        </authorList>
    </citation>
    <scope>INTERACTION WITH PPP1R15A</scope>
</reference>
<reference key="35">
    <citation type="journal article" date="2002" name="J. Exp. Med.">
        <title>Sustained activation of Lyn tyrosine kinase in vivo leads to autoimmunity.</title>
        <authorList>
            <person name="Hibbs M.L."/>
            <person name="Harder K.W."/>
            <person name="Armes J."/>
            <person name="Kountouri N."/>
            <person name="Quilici C."/>
            <person name="Casagranda F."/>
            <person name="Dunn A.R."/>
            <person name="Tarlinton D.M."/>
        </authorList>
    </citation>
    <scope>FUNCTION IN REGULATION OF IMMUNE RESPONSE</scope>
    <scope>CATALYTIC ACTIVITY</scope>
    <scope>AUTOPHOSPHORYLATION</scope>
    <scope>ACTIVITY REGULATION</scope>
    <scope>MUTAGENESIS OF TYR-508</scope>
</reference>
<reference key="36">
    <citation type="journal article" date="2002" name="J. Biol. Chem.">
        <title>Regulation of signaling in B cells through the phosphorylation of Syk on linker region tyrosines. A mechanism for negative signaling by the Lyn tyrosine kinase.</title>
        <authorList>
            <person name="Hong J.J."/>
            <person name="Yankee T.M."/>
            <person name="Harrison M.L."/>
            <person name="Geahlen R.L."/>
        </authorList>
    </citation>
    <scope>FUNCTION IN PHOSPHORYLATING SYK</scope>
</reference>
<reference key="37">
    <citation type="journal article" date="2003" name="FEBS Lett.">
        <title>Targeting of MIST to Src-family kinases via SKAP55-SLAP-130 adaptor complex in mast cells(1).</title>
        <authorList>
            <person name="Fujii Y."/>
            <person name="Wakahara S."/>
            <person name="Nakao T."/>
            <person name="Hara T."/>
            <person name="Ohtake H."/>
            <person name="Komurasaki T."/>
            <person name="Kitamura K."/>
            <person name="Tatsuno A."/>
            <person name="Fujiwara N."/>
            <person name="Hozumi N."/>
            <person name="Ra C."/>
            <person name="Kitamura D."/>
            <person name="Goitsuka R."/>
        </authorList>
    </citation>
    <scope>FUNCTION IN PHOSPHORYLATING CLNK</scope>
    <scope>INTERACTION WITH SKAP1 AND FYB1</scope>
</reference>
<reference key="38">
    <citation type="journal article" date="2003" name="J. Immunol.">
        <title>The Lyn tyrosine kinase negatively regulates neutrophil integrin signaling.</title>
        <authorList>
            <person name="Pereira S."/>
            <person name="Lowell C."/>
        </authorList>
    </citation>
    <scope>FUNCTION</scope>
</reference>
<reference key="39">
    <citation type="journal article" date="2004" name="Blood">
        <title>Lyn tyrosine kinase regulates thrombopoietin-induced proliferation of hematopoietic cell lines and primary megakaryocytic progenitors.</title>
        <authorList>
            <person name="Lannutti B.J."/>
            <person name="Drachman J.G."/>
        </authorList>
    </citation>
    <scope>FUNCTION IN DOWN-REGULATION OF THPO-MEDIATED CELL PROLIFERATION AND IN DOWN-REGULATION OF MAPK1/ERK2 AND MAPK3/ERK1 ACTIVATION</scope>
</reference>
<reference key="40">
    <citation type="journal article" date="2004" name="J. Biol. Chem.">
        <title>Differential regulation of the B cell receptor-mediated signaling by the E3 ubiquitin ligase Cbl.</title>
        <authorList>
            <person name="Shao Y."/>
            <person name="Yang C."/>
            <person name="Elly C."/>
            <person name="Liu Y.C."/>
        </authorList>
    </citation>
    <scope>UBIQUITINATION</scope>
</reference>
<reference key="41">
    <citation type="journal article" date="2004" name="J. Leukoc. Biol.">
        <title>The Src kinase Lyn is a negative regulator of mast cell proliferation.</title>
        <authorList>
            <person name="Hernandez-Hansen V."/>
            <person name="Mackay G.A."/>
            <person name="Lowell C.A."/>
            <person name="Wilson B.S."/>
            <person name="Oliver J.M."/>
        </authorList>
    </citation>
    <scope>FUNCTION IN MAST CELL PROLIFERATION AND IN DOWN-REGULATION OF AKT1; MAPK1/ERK2 AND MAPK3/ERK1 ACTIVATION</scope>
</reference>
<reference key="42">
    <citation type="journal article" date="2005" name="J. Immunol.">
        <title>The Lyn tyrosine kinase differentially regulates dendritic cell generation and maturation.</title>
        <authorList>
            <person name="Chu C.L."/>
            <person name="Lowell C.A."/>
        </authorList>
    </citation>
    <scope>FUNCTION AS NEGATIVE REGULATOR OF DENDRITIC CELL DIFFERENTIATION; PROLIFERATION AND SURVIVAL</scope>
</reference>
<reference key="43">
    <citation type="journal article" date="2005" name="J. Immunol.">
        <title>Lyn-deficient mice develop severe, persistent asthma: Lyn is a critical negative regulator of Th2 immunity.</title>
        <authorList>
            <person name="Beavitt S.J."/>
            <person name="Harder K.W."/>
            <person name="Kemp J.M."/>
            <person name="Jones J."/>
            <person name="Quilici C."/>
            <person name="Casagranda F."/>
            <person name="Lam E."/>
            <person name="Turner D."/>
            <person name="Brennan S."/>
            <person name="Sly P.D."/>
            <person name="Tarlinton D.M."/>
            <person name="Anderson G.P."/>
            <person name="Hibbs M.L."/>
        </authorList>
    </citation>
    <scope>DISRUPTION PHENOTYPE</scope>
    <scope>FUNCTION IN MATURATION OF DENDRITIC CELLS AND IN INFLAMMATORY RESPONSE</scope>
</reference>
<reference key="44">
    <citation type="journal article" date="2005" name="J. Immunol.">
        <title>Positive and negative regulation of mast cell activation by Lyn via the FcepsilonRI.</title>
        <authorList>
            <person name="Xiao W."/>
            <person name="Nishimoto H."/>
            <person name="Hong H."/>
            <person name="Kitaura J."/>
            <person name="Nunomura S."/>
            <person name="Maeda-Yamamoto M."/>
            <person name="Kawakami Y."/>
            <person name="Lowell C.A."/>
            <person name="Ra C."/>
            <person name="Kawakami T."/>
        </authorList>
    </citation>
    <scope>FUNCTION IN FCER1 SIGNALING; PHOSPHORYLATION OF SYK; MS4A2/FCER1B; INPP5D/SHIP AND PTPN6/SHP-1; ACTIVATION OF AKT1; MAPK1/ERK2 AND MAPK3/ERK1</scope>
    <scope>PHOSPHORYLATION AT TYR-397</scope>
    <scope>INTERACTION WITH MS4A2/FCER1B</scope>
</reference>
<reference key="45">
    <citation type="journal article" date="2006" name="Blood">
        <title>LIME acts as a transmembrane adapter mediating BCR-dependent B-cell activation.</title>
        <authorList>
            <person name="Ahn E."/>
            <person name="Lee H."/>
            <person name="Yun Y."/>
        </authorList>
    </citation>
    <scope>INTERACTION WITH LIME1</scope>
    <scope>FUNCTION IN PHOSPHORYLATION OF LIME1</scope>
</reference>
<reference key="46">
    <citation type="journal article" date="2006" name="Blood">
        <title>Identification of Y589 and Y599 in the juxtamembrane domain of Flt3 as ligand-induced autophosphorylation sites involved in binding of Src family kinases and the protein tyrosine phosphatase SHP2.</title>
        <authorList>
            <person name="Heiss E."/>
            <person name="Masson K."/>
            <person name="Sundberg C."/>
            <person name="Pedersen M."/>
            <person name="Sun J."/>
            <person name="Bengtsson S."/>
            <person name="Ronnstrand L."/>
        </authorList>
    </citation>
    <scope>INTERACTION WITH FLT3</scope>
</reference>
<reference key="47">
    <citation type="journal article" date="2006" name="J. Biol. Chem.">
        <title>Fer and Fps/Fes participate in a Lyn-dependent pathway from FcepsilonRI to platelet-endothelial cell adhesion molecule 1 to limit mast cell activation.</title>
        <authorList>
            <person name="Udell C.M."/>
            <person name="Samayawardhena L.A."/>
            <person name="Kawakami Y."/>
            <person name="Kawakami T."/>
            <person name="Craig A.W."/>
        </authorList>
    </citation>
    <scope>FUNCTION</scope>
</reference>
<reference key="48">
    <citation type="journal article" date="2007" name="Biochem. J.">
        <title>Paxillin family members function as Csk-binding proteins that regulate Lyn activity in human and murine platelets.</title>
        <authorList>
            <person name="Rathore V.B."/>
            <person name="Okada M."/>
            <person name="Newman P.J."/>
            <person name="Newman D.K."/>
        </authorList>
    </citation>
    <scope>INTERACTION WITH TGFB1I1</scope>
</reference>
<reference key="49">
    <citation type="journal article" date="2007" name="J. Biol. Chem.">
        <title>Leupaxin negatively regulates B cell receptor signaling.</title>
        <authorList>
            <person name="Chew V."/>
            <person name="Lam K.P."/>
        </authorList>
    </citation>
    <scope>FUNCTION IN PHOSPHORYLATION OF LPXN</scope>
    <scope>INTERACTION WITH LPXN</scope>
</reference>
<reference key="50">
    <citation type="journal article" date="2008" name="J. Proteome Res.">
        <title>Large-scale identification and evolution indexing of tyrosine phosphorylation sites from murine brain.</title>
        <authorList>
            <person name="Ballif B.A."/>
            <person name="Carey G.R."/>
            <person name="Sunyaev S.R."/>
            <person name="Gygi S.P."/>
        </authorList>
    </citation>
    <scope>PHOSPHORYLATION [LARGE SCALE ANALYSIS] AT TYR-508</scope>
    <scope>IDENTIFICATION BY MASS SPECTROMETRY [LARGE SCALE ANALYSIS]</scope>
    <source>
        <tissue>Brain</tissue>
    </source>
</reference>
<reference key="51">
    <citation type="journal article" date="2009" name="Blood">
        <title>Liar, a novel Lyn-binding nuclear/cytoplasmic shuttling protein that influences erythropoietin-induced differentiation.</title>
        <authorList>
            <person name="Samuels A.L."/>
            <person name="Klinken S.P."/>
            <person name="Ingley E."/>
        </authorList>
    </citation>
    <scope>INTERACTION WITH ANKRD54</scope>
</reference>
<reference key="52">
    <citation type="journal article" date="2009" name="Immunity">
        <title>The phagosomal proteome in interferon-gamma-activated macrophages.</title>
        <authorList>
            <person name="Trost M."/>
            <person name="English L."/>
            <person name="Lemieux S."/>
            <person name="Courcelles M."/>
            <person name="Desjardins M."/>
            <person name="Thibault P."/>
        </authorList>
    </citation>
    <scope>PHOSPHORYLATION [LARGE SCALE ANALYSIS] AT SER-19; TYR-397 AND TYR-508</scope>
    <scope>IDENTIFICATION BY MASS SPECTROMETRY [LARGE SCALE ANALYSIS]</scope>
</reference>
<reference key="53">
    <citation type="journal article" date="2009" name="PLoS ONE">
        <title>Erythropoietin down-regulates stem cell factor receptor (Kit) expression in the leukemic proerythroblast: role of Lyn kinase.</title>
        <authorList>
            <person name="Kosmider O."/>
            <person name="Buet D."/>
            <person name="Gallais I."/>
            <person name="Denis N."/>
            <person name="Moreau-Gachelin F."/>
        </authorList>
    </citation>
    <scope>FUNCTION</scope>
</reference>
<reference key="54">
    <citation type="journal article" date="2010" name="Cell">
        <title>A tissue-specific atlas of mouse protein phosphorylation and expression.</title>
        <authorList>
            <person name="Huttlin E.L."/>
            <person name="Jedrychowski M.P."/>
            <person name="Elias J.E."/>
            <person name="Goswami T."/>
            <person name="Rad R."/>
            <person name="Beausoleil S.A."/>
            <person name="Villen J."/>
            <person name="Haas W."/>
            <person name="Sowa M.E."/>
            <person name="Gygi S.P."/>
        </authorList>
    </citation>
    <scope>PHOSPHORYLATION [LARGE SCALE ANALYSIS] AT TYR-397</scope>
    <scope>IDENTIFICATION BY MASS SPECTROMETRY [LARGE SCALE ANALYSIS]</scope>
    <source>
        <tissue>Brown adipose tissue</tissue>
        <tissue>Heart</tissue>
        <tissue>Kidney</tissue>
        <tissue>Liver</tissue>
        <tissue>Lung</tissue>
        <tissue>Spleen</tissue>
    </source>
</reference>
<reference key="55">
    <citation type="journal article" date="2010" name="PLoS ONE">
        <title>Themis2/ICB1 is a signaling scaffold that selectively regulates macrophage Toll-like receptor signaling and cytokine production.</title>
        <authorList>
            <person name="Peirce M.J."/>
            <person name="Brook M."/>
            <person name="Morrice N."/>
            <person name="Snelgrove R."/>
            <person name="Begum S."/>
            <person name="Lanfrancotti A."/>
            <person name="Notley C."/>
            <person name="Hussell T."/>
            <person name="Cope A.P."/>
            <person name="Wait R."/>
        </authorList>
    </citation>
    <scope>INTERACTION WITH THEMIS2</scope>
</reference>
<reference key="56">
    <citation type="journal article" date="2010" name="J. Biol. Chem.">
        <title>An important role of the SRC family kinase Lyn in stimulating platelet granule secretion.</title>
        <authorList>
            <person name="Li Z."/>
            <person name="Zhang G."/>
            <person name="Liu J."/>
            <person name="Stojanovic A."/>
            <person name="Ruan C."/>
            <person name="Lowell C.A."/>
            <person name="Du X."/>
        </authorList>
    </citation>
    <scope>FUNCTION IN PLATELET GRANULE SECRETION AND PLATELET AGGREGATION</scope>
</reference>
<reference key="57">
    <citation type="journal article" date="2010" name="J. Immunol.">
        <title>Activation of murine macrophages via TLR2 and TLR4 is negatively regulated by a Lyn/PI3K module and promoted by SHIP1.</title>
        <authorList>
            <person name="Keck S."/>
            <person name="Freudenberg M."/>
            <person name="Huber M."/>
        </authorList>
    </citation>
    <scope>FUNCTION IN DOWN-REGULATION OF TLR2 AND TLR4 SIGNALING; CYTOKINE RELEASE AND THE INFLAMMATORY RESPONSE TO LIPOPOLYSACCHARIDE</scope>
</reference>
<reference key="58">
    <citation type="journal article" date="2012" name="PLoS Pathog.">
        <title>CEACAM1 negatively regulates IL-1beta production in LPS activated neutrophils by recruiting SHP-1 to a SYK-TLR4-CEACAM1 complex.</title>
        <authorList>
            <person name="Lu R."/>
            <person name="Pan H."/>
            <person name="Shively J.E."/>
        </authorList>
    </citation>
    <scope>INTERACTION WITH CEACAM1</scope>
</reference>
<reference key="59">
    <citation type="journal article" date="2017" name="Nat. Commun.">
        <title>SCIMP is a transmembrane non-TIR TLR adaptor that promotes proinflammatory cytokine production from macrophages.</title>
        <authorList>
            <person name="Luo L."/>
            <person name="Bokil N.J."/>
            <person name="Wall A.A."/>
            <person name="Kapetanovic R."/>
            <person name="Lansdaal N.M."/>
            <person name="Marceline F."/>
            <person name="Burgess B.J."/>
            <person name="Tong S.J."/>
            <person name="Guo Z."/>
            <person name="Alexandrov K."/>
            <person name="Ross I.L."/>
            <person name="Hibbs M.L."/>
            <person name="Stow J.L."/>
            <person name="Sweet M.J."/>
        </authorList>
    </citation>
    <scope>IDENTIFICATION BY MASS SPECTROMETRY</scope>
    <scope>FUNCTION</scope>
    <scope>INTERACTION WITH SCIMP</scope>
    <scope>TISSUE SPECIFICITY</scope>
</reference>
<reference key="60">
    <citation type="journal article" date="2004" name="Oncogene">
        <title>Src-family kinases in B-cell development and signaling.</title>
        <authorList>
            <person name="Gauld S.B."/>
            <person name="Cambier J.C."/>
        </authorList>
    </citation>
    <scope>REVIEW ON ROLE IN B CELLS</scope>
</reference>
<reference key="61">
    <citation type="journal article" date="2005" name="Immunity">
        <title>Lyn tyrosine kinase: accentuating the positive and the negative.</title>
        <authorList>
            <person name="Xu Y."/>
            <person name="Harder K.W."/>
            <person name="Huntington N.D."/>
            <person name="Hibbs M.L."/>
            <person name="Tarlinton D.M."/>
        </authorList>
    </citation>
    <scope>REVIEW ON ROLE IN B CELLS</scope>
</reference>
<reference key="62">
    <citation type="journal article" date="2004" name="Mol. Immunol.">
        <title>Src-family kinases: rheostats of immune cell signaling.</title>
        <authorList>
            <person name="Lowell C.A."/>
        </authorList>
    </citation>
    <scope>REVIEW</scope>
</reference>
<reference key="63">
    <citation type="journal article" date="2009" name="Immunol. Rev.">
        <title>Multiple roles of Lyn kinase in myeloid cell signaling and function.</title>
        <authorList>
            <person name="Scapini P."/>
            <person name="Pereira S."/>
            <person name="Zhang H."/>
            <person name="Lowell C.A."/>
        </authorList>
    </citation>
    <scope>REVIEW</scope>
</reference>
<reference key="64">
    <citation type="journal article" date="2009" name="J. Biol. Chem.">
        <title>Crystal structures of the Lyn protein tyrosine kinase domain in its Apo- and inhibitor-bound state.</title>
        <authorList>
            <person name="Williams N.K."/>
            <person name="Lucet I.S."/>
            <person name="Klinken S.P."/>
            <person name="Ingley E."/>
            <person name="Rossjohn J."/>
        </authorList>
    </citation>
    <scope>X-RAY CRYSTALLOGRAPHY (2.50 ANGSTROMS) OF 239-512 IN COMPLEXES WITH DASATINIB; PP2 AND AMP-PNP</scope>
    <scope>CATALYTIC ACTIVITY</scope>
    <scope>AUTOPHOSPHORYLATION</scope>
    <scope>ACTIVITY REGULATION</scope>
    <scope>IDENTIFICATION BY MASS SPECTROMETRY</scope>
</reference>
<dbReference type="EC" id="2.7.10.2"/>
<dbReference type="EMBL" id="M64608">
    <property type="protein sequence ID" value="AAA39470.1"/>
    <property type="molecule type" value="mRNA"/>
</dbReference>
<dbReference type="EMBL" id="M57696">
    <property type="protein sequence ID" value="AAA39471.1"/>
    <property type="molecule type" value="mRNA"/>
</dbReference>
<dbReference type="EMBL" id="M57697">
    <property type="protein sequence ID" value="AAA39472.1"/>
    <property type="molecule type" value="mRNA"/>
</dbReference>
<dbReference type="EMBL" id="BC031547">
    <property type="protein sequence ID" value="AAH31547.1"/>
    <property type="molecule type" value="mRNA"/>
</dbReference>
<dbReference type="EMBL" id="M33426">
    <property type="protein sequence ID" value="AAA40017.1"/>
    <property type="molecule type" value="mRNA"/>
</dbReference>
<dbReference type="CCDS" id="CCDS17939.1">
    <molecule id="P25911-2"/>
</dbReference>
<dbReference type="CCDS" id="CCDS51109.1">
    <molecule id="P25911-1"/>
</dbReference>
<dbReference type="PIR" id="A39719">
    <property type="entry name" value="A39719"/>
</dbReference>
<dbReference type="RefSeq" id="NP_001104566.1">
    <molecule id="P25911-1"/>
    <property type="nucleotide sequence ID" value="NM_001111096.2"/>
</dbReference>
<dbReference type="RefSeq" id="NP_034877.2">
    <molecule id="P25911-2"/>
    <property type="nucleotide sequence ID" value="NM_010747.3"/>
</dbReference>
<dbReference type="PDB" id="2ZV7">
    <property type="method" value="X-ray"/>
    <property type="resolution" value="2.50 A"/>
    <property type="chains" value="A=239-512"/>
</dbReference>
<dbReference type="PDB" id="2ZV8">
    <property type="method" value="X-ray"/>
    <property type="resolution" value="2.70 A"/>
    <property type="chains" value="A=239-512"/>
</dbReference>
<dbReference type="PDB" id="2ZV9">
    <property type="method" value="X-ray"/>
    <property type="resolution" value="2.76 A"/>
    <property type="chains" value="A=239-512"/>
</dbReference>
<dbReference type="PDB" id="2ZVA">
    <property type="method" value="X-ray"/>
    <property type="resolution" value="2.60 A"/>
    <property type="chains" value="A=239-512"/>
</dbReference>
<dbReference type="PDB" id="4TZI">
    <property type="method" value="X-ray"/>
    <property type="resolution" value="2.10 A"/>
    <property type="chains" value="A/B=115-229"/>
</dbReference>
<dbReference type="PDBsum" id="2ZV7"/>
<dbReference type="PDBsum" id="2ZV8"/>
<dbReference type="PDBsum" id="2ZV9"/>
<dbReference type="PDBsum" id="2ZVA"/>
<dbReference type="PDBsum" id="4TZI"/>
<dbReference type="SMR" id="P25911"/>
<dbReference type="BioGRID" id="201256">
    <property type="interactions" value="19"/>
</dbReference>
<dbReference type="CORUM" id="P25911"/>
<dbReference type="DIP" id="DIP-37806N"/>
<dbReference type="ELM" id="P25911"/>
<dbReference type="FunCoup" id="P25911">
    <property type="interactions" value="795"/>
</dbReference>
<dbReference type="IntAct" id="P25911">
    <property type="interactions" value="18"/>
</dbReference>
<dbReference type="MINT" id="P25911"/>
<dbReference type="STRING" id="10090.ENSMUSP00000038838"/>
<dbReference type="BindingDB" id="P25911"/>
<dbReference type="ChEMBL" id="CHEMBL2258"/>
<dbReference type="GlyGen" id="P25911">
    <property type="glycosylation" value="1 site, 1 O-linked glycan (1 site)"/>
</dbReference>
<dbReference type="iPTMnet" id="P25911"/>
<dbReference type="PhosphoSitePlus" id="P25911"/>
<dbReference type="SwissPalm" id="P25911"/>
<dbReference type="jPOST" id="P25911"/>
<dbReference type="PaxDb" id="10090-ENSMUSP00000038838"/>
<dbReference type="PeptideAtlas" id="P25911"/>
<dbReference type="ProteomicsDB" id="295736">
    <molecule id="P25911-1"/>
</dbReference>
<dbReference type="ProteomicsDB" id="295737">
    <molecule id="P25911-2"/>
</dbReference>
<dbReference type="Antibodypedia" id="51187">
    <property type="antibodies" value="926 antibodies from 45 providers"/>
</dbReference>
<dbReference type="DNASU" id="17096"/>
<dbReference type="Ensembl" id="ENSMUST00000041377.13">
    <molecule id="P25911-1"/>
    <property type="protein sequence ID" value="ENSMUSP00000038838.7"/>
    <property type="gene ID" value="ENSMUSG00000042228.15"/>
</dbReference>
<dbReference type="Ensembl" id="ENSMUST00000103010.4">
    <molecule id="P25911-2"/>
    <property type="protein sequence ID" value="ENSMUSP00000100075.4"/>
    <property type="gene ID" value="ENSMUSG00000042228.15"/>
</dbReference>
<dbReference type="GeneID" id="17096"/>
<dbReference type="KEGG" id="mmu:17096"/>
<dbReference type="UCSC" id="uc008rwm.2">
    <molecule id="P25911-1"/>
    <property type="organism name" value="mouse"/>
</dbReference>
<dbReference type="AGR" id="MGI:96892"/>
<dbReference type="CTD" id="4067"/>
<dbReference type="MGI" id="MGI:96892">
    <property type="gene designation" value="Lyn"/>
</dbReference>
<dbReference type="VEuPathDB" id="HostDB:ENSMUSG00000042228"/>
<dbReference type="eggNOG" id="KOG0197">
    <property type="taxonomic scope" value="Eukaryota"/>
</dbReference>
<dbReference type="GeneTree" id="ENSGT00940000158011"/>
<dbReference type="HOGENOM" id="CLU_000288_7_2_1"/>
<dbReference type="InParanoid" id="P25911"/>
<dbReference type="OMA" id="TGNMGCI"/>
<dbReference type="OrthoDB" id="4062651at2759"/>
<dbReference type="PhylomeDB" id="P25911"/>
<dbReference type="TreeFam" id="TF351634"/>
<dbReference type="BRENDA" id="2.7.10.2">
    <property type="organism ID" value="3474"/>
</dbReference>
<dbReference type="Reactome" id="R-MMU-114604">
    <property type="pathway name" value="GPVI-mediated activation cascade"/>
</dbReference>
<dbReference type="Reactome" id="R-MMU-1433557">
    <property type="pathway name" value="Signaling by SCF-KIT"/>
</dbReference>
<dbReference type="Reactome" id="R-MMU-1433559">
    <property type="pathway name" value="Regulation of KIT signaling"/>
</dbReference>
<dbReference type="Reactome" id="R-MMU-202733">
    <property type="pathway name" value="Cell surface interactions at the vascular wall"/>
</dbReference>
<dbReference type="Reactome" id="R-MMU-2029481">
    <property type="pathway name" value="FCGR activation"/>
</dbReference>
<dbReference type="Reactome" id="R-MMU-210990">
    <property type="pathway name" value="PECAM1 interactions"/>
</dbReference>
<dbReference type="Reactome" id="R-MMU-2454202">
    <property type="pathway name" value="Fc epsilon receptor (FCERI) signaling"/>
</dbReference>
<dbReference type="Reactome" id="R-MMU-2730905">
    <property type="pathway name" value="Role of LAT2/NTAL/LAB on calcium mobilization"/>
</dbReference>
<dbReference type="Reactome" id="R-MMU-2871796">
    <property type="pathway name" value="FCERI mediated MAPK activation"/>
</dbReference>
<dbReference type="Reactome" id="R-MMU-2871809">
    <property type="pathway name" value="FCERI mediated Ca+2 mobilization"/>
</dbReference>
<dbReference type="Reactome" id="R-MMU-2871837">
    <property type="pathway name" value="FCERI mediated NF-kB activation"/>
</dbReference>
<dbReference type="Reactome" id="R-MMU-389356">
    <property type="pathway name" value="Co-stimulation by CD28"/>
</dbReference>
<dbReference type="Reactome" id="R-MMU-389513">
    <property type="pathway name" value="Co-inhibition by CTLA4"/>
</dbReference>
<dbReference type="Reactome" id="R-MMU-3928662">
    <property type="pathway name" value="EPHB-mediated forward signaling"/>
</dbReference>
<dbReference type="Reactome" id="R-MMU-3928663">
    <property type="pathway name" value="EPHA-mediated growth cone collapse"/>
</dbReference>
<dbReference type="Reactome" id="R-MMU-3928665">
    <property type="pathway name" value="EPH-ephrin mediated repulsion of cells"/>
</dbReference>
<dbReference type="Reactome" id="R-MMU-5621480">
    <property type="pathway name" value="Dectin-2 family"/>
</dbReference>
<dbReference type="Reactome" id="R-MMU-5621575">
    <property type="pathway name" value="CD209 (DC-SIGN) signaling"/>
</dbReference>
<dbReference type="Reactome" id="R-MMU-5690714">
    <property type="pathway name" value="CD22 mediated BCR regulation"/>
</dbReference>
<dbReference type="Reactome" id="R-MMU-69231">
    <property type="pathway name" value="Cyclin D associated events in G1"/>
</dbReference>
<dbReference type="Reactome" id="R-MMU-75892">
    <property type="pathway name" value="Platelet Adhesion to exposed collagen"/>
</dbReference>
<dbReference type="Reactome" id="R-MMU-9006335">
    <property type="pathway name" value="Signaling by Erythropoietin"/>
</dbReference>
<dbReference type="Reactome" id="R-MMU-9027276">
    <property type="pathway name" value="Erythropoietin activates Phosphoinositide-3-kinase (PI3K)"/>
</dbReference>
<dbReference type="Reactome" id="R-MMU-9027284">
    <property type="pathway name" value="Erythropoietin activates RAS"/>
</dbReference>
<dbReference type="Reactome" id="R-MMU-912631">
    <property type="pathway name" value="Regulation of signaling by CBL"/>
</dbReference>
<dbReference type="Reactome" id="R-MMU-9674555">
    <property type="pathway name" value="Signaling by CSF3 (G-CSF)"/>
</dbReference>
<dbReference type="Reactome" id="R-MMU-9705462">
    <property type="pathway name" value="Inactivation of CSF3 (G-CSF) signaling"/>
</dbReference>
<dbReference type="Reactome" id="R-MMU-982772">
    <property type="pathway name" value="Growth hormone receptor signaling"/>
</dbReference>
<dbReference type="BioGRID-ORCS" id="17096">
    <property type="hits" value="4 hits in 79 CRISPR screens"/>
</dbReference>
<dbReference type="CD-CODE" id="CE726F99">
    <property type="entry name" value="Postsynaptic density"/>
</dbReference>
<dbReference type="ChiTaRS" id="Lyn">
    <property type="organism name" value="mouse"/>
</dbReference>
<dbReference type="EvolutionaryTrace" id="P25911"/>
<dbReference type="PRO" id="PR:P25911"/>
<dbReference type="Proteomes" id="UP000000589">
    <property type="component" value="Chromosome 4"/>
</dbReference>
<dbReference type="RNAct" id="P25911">
    <property type="molecule type" value="protein"/>
</dbReference>
<dbReference type="Bgee" id="ENSMUSG00000042228">
    <property type="expression patterns" value="Expressed in stroma of bone marrow and 224 other cell types or tissues"/>
</dbReference>
<dbReference type="ExpressionAtlas" id="P25911">
    <property type="expression patterns" value="baseline and differential"/>
</dbReference>
<dbReference type="GO" id="GO:0005912">
    <property type="term" value="C:adherens junction"/>
    <property type="evidence" value="ECO:0007669"/>
    <property type="project" value="Ensembl"/>
</dbReference>
<dbReference type="GO" id="GO:0005737">
    <property type="term" value="C:cytoplasm"/>
    <property type="evidence" value="ECO:0000314"/>
    <property type="project" value="UniProtKB"/>
</dbReference>
<dbReference type="GO" id="GO:0009898">
    <property type="term" value="C:cytoplasmic side of plasma membrane"/>
    <property type="evidence" value="ECO:0007669"/>
    <property type="project" value="Ensembl"/>
</dbReference>
<dbReference type="GO" id="GO:0005829">
    <property type="term" value="C:cytosol"/>
    <property type="evidence" value="ECO:0000304"/>
    <property type="project" value="Reactome"/>
</dbReference>
<dbReference type="GO" id="GO:0098978">
    <property type="term" value="C:glutamatergic synapse"/>
    <property type="evidence" value="ECO:0007669"/>
    <property type="project" value="Ensembl"/>
</dbReference>
<dbReference type="GO" id="GO:0005794">
    <property type="term" value="C:Golgi apparatus"/>
    <property type="evidence" value="ECO:0007669"/>
    <property type="project" value="UniProtKB-SubCell"/>
</dbReference>
<dbReference type="GO" id="GO:0034666">
    <property type="term" value="C:integrin alpha2-beta1 complex"/>
    <property type="evidence" value="ECO:0007669"/>
    <property type="project" value="Ensembl"/>
</dbReference>
<dbReference type="GO" id="GO:0045121">
    <property type="term" value="C:membrane raft"/>
    <property type="evidence" value="ECO:0000314"/>
    <property type="project" value="ARUK-UCL"/>
</dbReference>
<dbReference type="GO" id="GO:0030061">
    <property type="term" value="C:mitochondrial crista"/>
    <property type="evidence" value="ECO:0007669"/>
    <property type="project" value="Ensembl"/>
</dbReference>
<dbReference type="GO" id="GO:0005634">
    <property type="term" value="C:nucleus"/>
    <property type="evidence" value="ECO:0000314"/>
    <property type="project" value="UniProtKB"/>
</dbReference>
<dbReference type="GO" id="GO:0048471">
    <property type="term" value="C:perinuclear region of cytoplasm"/>
    <property type="evidence" value="ECO:0007669"/>
    <property type="project" value="UniProtKB-SubCell"/>
</dbReference>
<dbReference type="GO" id="GO:0005886">
    <property type="term" value="C:plasma membrane"/>
    <property type="evidence" value="ECO:0000314"/>
    <property type="project" value="MGI"/>
</dbReference>
<dbReference type="GO" id="GO:0099091">
    <property type="term" value="C:postsynaptic specialization, intracellular component"/>
    <property type="evidence" value="ECO:0007669"/>
    <property type="project" value="Ensembl"/>
</dbReference>
<dbReference type="GO" id="GO:0032991">
    <property type="term" value="C:protein-containing complex"/>
    <property type="evidence" value="ECO:0000314"/>
    <property type="project" value="UniProtKB"/>
</dbReference>
<dbReference type="GO" id="GO:0005524">
    <property type="term" value="F:ATP binding"/>
    <property type="evidence" value="ECO:0007669"/>
    <property type="project" value="UniProtKB-KW"/>
</dbReference>
<dbReference type="GO" id="GO:0046875">
    <property type="term" value="F:ephrin receptor binding"/>
    <property type="evidence" value="ECO:0007669"/>
    <property type="project" value="Ensembl"/>
</dbReference>
<dbReference type="GO" id="GO:0005128">
    <property type="term" value="F:erythropoietin receptor binding"/>
    <property type="evidence" value="ECO:0000304"/>
    <property type="project" value="UniProtKB"/>
</dbReference>
<dbReference type="GO" id="GO:0043015">
    <property type="term" value="F:gamma-tubulin binding"/>
    <property type="evidence" value="ECO:0007669"/>
    <property type="project" value="Ensembl"/>
</dbReference>
<dbReference type="GO" id="GO:0043208">
    <property type="term" value="F:glycosphingolipid binding"/>
    <property type="evidence" value="ECO:0007669"/>
    <property type="project" value="Ensembl"/>
</dbReference>
<dbReference type="GO" id="GO:0005178">
    <property type="term" value="F:integrin binding"/>
    <property type="evidence" value="ECO:0007669"/>
    <property type="project" value="Ensembl"/>
</dbReference>
<dbReference type="GO" id="GO:0004715">
    <property type="term" value="F:non-membrane spanning protein tyrosine kinase activity"/>
    <property type="evidence" value="ECO:0000315"/>
    <property type="project" value="UniProtKB"/>
</dbReference>
<dbReference type="GO" id="GO:0141038">
    <property type="term" value="F:phosphatidylinositol 3-kinase activator activity"/>
    <property type="evidence" value="ECO:0000315"/>
    <property type="project" value="UniProtKB"/>
</dbReference>
<dbReference type="GO" id="GO:0051219">
    <property type="term" value="F:phosphoprotein binding"/>
    <property type="evidence" value="ECO:0007669"/>
    <property type="project" value="Ensembl"/>
</dbReference>
<dbReference type="GO" id="GO:0140031">
    <property type="term" value="F:phosphorylation-dependent protein binding"/>
    <property type="evidence" value="ECO:0007669"/>
    <property type="project" value="Ensembl"/>
</dbReference>
<dbReference type="GO" id="GO:0005161">
    <property type="term" value="F:platelet-derived growth factor receptor binding"/>
    <property type="evidence" value="ECO:0007669"/>
    <property type="project" value="Ensembl"/>
</dbReference>
<dbReference type="GO" id="GO:0004672">
    <property type="term" value="F:protein kinase activity"/>
    <property type="evidence" value="ECO:0000314"/>
    <property type="project" value="MGI"/>
</dbReference>
<dbReference type="GO" id="GO:0004713">
    <property type="term" value="F:protein tyrosine kinase activity"/>
    <property type="evidence" value="ECO:0000314"/>
    <property type="project" value="UniProtKB"/>
</dbReference>
<dbReference type="GO" id="GO:0044877">
    <property type="term" value="F:protein-containing complex binding"/>
    <property type="evidence" value="ECO:0000353"/>
    <property type="project" value="MGI"/>
</dbReference>
<dbReference type="GO" id="GO:0097110">
    <property type="term" value="F:scaffold protein binding"/>
    <property type="evidence" value="ECO:0007669"/>
    <property type="project" value="Ensembl"/>
</dbReference>
<dbReference type="GO" id="GO:0017124">
    <property type="term" value="F:SH3 domain binding"/>
    <property type="evidence" value="ECO:0000353"/>
    <property type="project" value="MGI"/>
</dbReference>
<dbReference type="GO" id="GO:0030546">
    <property type="term" value="F:signaling receptor activator activity"/>
    <property type="evidence" value="ECO:0007669"/>
    <property type="project" value="Ensembl"/>
</dbReference>
<dbReference type="GO" id="GO:0044325">
    <property type="term" value="F:transmembrane transporter binding"/>
    <property type="evidence" value="ECO:0007669"/>
    <property type="project" value="Ensembl"/>
</dbReference>
<dbReference type="GO" id="GO:0031625">
    <property type="term" value="F:ubiquitin protein ligase binding"/>
    <property type="evidence" value="ECO:0007669"/>
    <property type="project" value="Ensembl"/>
</dbReference>
<dbReference type="GO" id="GO:0002250">
    <property type="term" value="P:adaptive immune response"/>
    <property type="evidence" value="ECO:0007669"/>
    <property type="project" value="UniProtKB-KW"/>
</dbReference>
<dbReference type="GO" id="GO:0006914">
    <property type="term" value="P:autophagy"/>
    <property type="evidence" value="ECO:0000315"/>
    <property type="project" value="MGI"/>
</dbReference>
<dbReference type="GO" id="GO:0001782">
    <property type="term" value="P:B cell homeostasis"/>
    <property type="evidence" value="ECO:0000315"/>
    <property type="project" value="UniProtKB"/>
</dbReference>
<dbReference type="GO" id="GO:0050853">
    <property type="term" value="P:B cell receptor signaling pathway"/>
    <property type="evidence" value="ECO:0000314"/>
    <property type="project" value="MGI"/>
</dbReference>
<dbReference type="GO" id="GO:0038159">
    <property type="term" value="P:C-X-C chemokine receptor CXCR4 signaling pathway"/>
    <property type="evidence" value="ECO:0007669"/>
    <property type="project" value="Ensembl"/>
</dbReference>
<dbReference type="GO" id="GO:0000902">
    <property type="term" value="P:cell morphogenesis"/>
    <property type="evidence" value="ECO:0000316"/>
    <property type="project" value="MGI"/>
</dbReference>
<dbReference type="GO" id="GO:0034605">
    <property type="term" value="P:cellular response to heat"/>
    <property type="evidence" value="ECO:0007669"/>
    <property type="project" value="Ensembl"/>
</dbReference>
<dbReference type="GO" id="GO:0071300">
    <property type="term" value="P:cellular response to retinoic acid"/>
    <property type="evidence" value="ECO:0007669"/>
    <property type="project" value="Ensembl"/>
</dbReference>
<dbReference type="GO" id="GO:0097028">
    <property type="term" value="P:dendritic cell differentiation"/>
    <property type="evidence" value="ECO:0000315"/>
    <property type="project" value="UniProtKB"/>
</dbReference>
<dbReference type="GO" id="GO:0000077">
    <property type="term" value="P:DNA damage checkpoint signaling"/>
    <property type="evidence" value="ECO:0007669"/>
    <property type="project" value="Ensembl"/>
</dbReference>
<dbReference type="GO" id="GO:0030222">
    <property type="term" value="P:eosinophil differentiation"/>
    <property type="evidence" value="ECO:0007669"/>
    <property type="project" value="Ensembl"/>
</dbReference>
<dbReference type="GO" id="GO:0048013">
    <property type="term" value="P:ephrin receptor signaling pathway"/>
    <property type="evidence" value="ECO:0007669"/>
    <property type="project" value="Ensembl"/>
</dbReference>
<dbReference type="GO" id="GO:0030218">
    <property type="term" value="P:erythrocyte differentiation"/>
    <property type="evidence" value="ECO:0000315"/>
    <property type="project" value="UniProtKB"/>
</dbReference>
<dbReference type="GO" id="GO:0015908">
    <property type="term" value="P:fatty acid transport"/>
    <property type="evidence" value="ECO:0007669"/>
    <property type="project" value="Ensembl"/>
</dbReference>
<dbReference type="GO" id="GO:0002774">
    <property type="term" value="P:Fc receptor mediated inhibitory signaling pathway"/>
    <property type="evidence" value="ECO:0000315"/>
    <property type="project" value="UniProtKB"/>
</dbReference>
<dbReference type="GO" id="GO:0002431">
    <property type="term" value="P:Fc receptor mediated stimulatory signaling pathway"/>
    <property type="evidence" value="ECO:0000315"/>
    <property type="project" value="UniProtKB"/>
</dbReference>
<dbReference type="GO" id="GO:0002244">
    <property type="term" value="P:hematopoietic progenitor cell differentiation"/>
    <property type="evidence" value="ECO:0007669"/>
    <property type="project" value="Ensembl"/>
</dbReference>
<dbReference type="GO" id="GO:0042541">
    <property type="term" value="P:hemoglobin biosynthetic process"/>
    <property type="evidence" value="ECO:0000304"/>
    <property type="project" value="UniProtKB"/>
</dbReference>
<dbReference type="GO" id="GO:0030097">
    <property type="term" value="P:hemopoiesis"/>
    <property type="evidence" value="ECO:0000315"/>
    <property type="project" value="UniProtKB"/>
</dbReference>
<dbReference type="GO" id="GO:0002553">
    <property type="term" value="P:histamine secretion by mast cell"/>
    <property type="evidence" value="ECO:0007669"/>
    <property type="project" value="Ensembl"/>
</dbReference>
<dbReference type="GO" id="GO:0002768">
    <property type="term" value="P:immune response-regulating cell surface receptor signaling pathway"/>
    <property type="evidence" value="ECO:0000315"/>
    <property type="project" value="UniProtKB"/>
</dbReference>
<dbReference type="GO" id="GO:0045087">
    <property type="term" value="P:innate immune response"/>
    <property type="evidence" value="ECO:0007669"/>
    <property type="project" value="UniProtKB-KW"/>
</dbReference>
<dbReference type="GO" id="GO:0038043">
    <property type="term" value="P:interleukin-5-mediated signaling pathway"/>
    <property type="evidence" value="ECO:0007669"/>
    <property type="project" value="Ensembl"/>
</dbReference>
<dbReference type="GO" id="GO:0035556">
    <property type="term" value="P:intracellular signal transduction"/>
    <property type="evidence" value="ECO:0000314"/>
    <property type="project" value="MGI"/>
</dbReference>
<dbReference type="GO" id="GO:0031663">
    <property type="term" value="P:lipopolysaccharide-mediated signaling pathway"/>
    <property type="evidence" value="ECO:0000315"/>
    <property type="project" value="UniProtKB"/>
</dbReference>
<dbReference type="GO" id="GO:0030889">
    <property type="term" value="P:negative regulation of B cell proliferation"/>
    <property type="evidence" value="ECO:0000315"/>
    <property type="project" value="UniProtKB"/>
</dbReference>
<dbReference type="GO" id="GO:0008285">
    <property type="term" value="P:negative regulation of cell population proliferation"/>
    <property type="evidence" value="ECO:0000315"/>
    <property type="project" value="UniProtKB"/>
</dbReference>
<dbReference type="GO" id="GO:0070373">
    <property type="term" value="P:negative regulation of ERK1 and ERK2 cascade"/>
    <property type="evidence" value="ECO:0000315"/>
    <property type="project" value="UniProtKB"/>
</dbReference>
<dbReference type="GO" id="GO:1902532">
    <property type="term" value="P:negative regulation of intracellular signal transduction"/>
    <property type="evidence" value="ECO:0000315"/>
    <property type="project" value="UniProtKB"/>
</dbReference>
<dbReference type="GO" id="GO:0043407">
    <property type="term" value="P:negative regulation of MAP kinase activity"/>
    <property type="evidence" value="ECO:0000315"/>
    <property type="project" value="UniProtKB"/>
</dbReference>
<dbReference type="GO" id="GO:0070667">
    <property type="term" value="P:negative regulation of mast cell proliferation"/>
    <property type="evidence" value="ECO:0000315"/>
    <property type="project" value="UniProtKB"/>
</dbReference>
<dbReference type="GO" id="GO:0002762">
    <property type="term" value="P:negative regulation of myeloid leukocyte differentiation"/>
    <property type="evidence" value="ECO:0000315"/>
    <property type="project" value="UniProtKB"/>
</dbReference>
<dbReference type="GO" id="GO:0001933">
    <property type="term" value="P:negative regulation of protein phosphorylation"/>
    <property type="evidence" value="ECO:0000315"/>
    <property type="project" value="UniProtKB"/>
</dbReference>
<dbReference type="GO" id="GO:0034136">
    <property type="term" value="P:negative regulation of toll-like receptor 2 signaling pathway"/>
    <property type="evidence" value="ECO:0000315"/>
    <property type="project" value="UniProtKB"/>
</dbReference>
<dbReference type="GO" id="GO:0034144">
    <property type="term" value="P:negative regulation of toll-like receptor 4 signaling pathway"/>
    <property type="evidence" value="ECO:0000315"/>
    <property type="project" value="UniProtKB"/>
</dbReference>
<dbReference type="GO" id="GO:0150076">
    <property type="term" value="P:neuroinflammatory response"/>
    <property type="evidence" value="ECO:0000316"/>
    <property type="project" value="MGI"/>
</dbReference>
<dbReference type="GO" id="GO:0031175">
    <property type="term" value="P:neuron projection development"/>
    <property type="evidence" value="ECO:0000315"/>
    <property type="project" value="MGI"/>
</dbReference>
<dbReference type="GO" id="GO:0014003">
    <property type="term" value="P:oligodendrocyte development"/>
    <property type="evidence" value="ECO:0007669"/>
    <property type="project" value="Ensembl"/>
</dbReference>
<dbReference type="GO" id="GO:0018108">
    <property type="term" value="P:peptidyl-tyrosine phosphorylation"/>
    <property type="evidence" value="ECO:0000314"/>
    <property type="project" value="UniProtKB"/>
</dbReference>
<dbReference type="GO" id="GO:0002576">
    <property type="term" value="P:platelet degranulation"/>
    <property type="evidence" value="ECO:0000315"/>
    <property type="project" value="UniProtKB"/>
</dbReference>
<dbReference type="GO" id="GO:1902993">
    <property type="term" value="P:positive regulation of amyloid precursor protein catabolic process"/>
    <property type="evidence" value="ECO:0007669"/>
    <property type="project" value="Ensembl"/>
</dbReference>
<dbReference type="GO" id="GO:0030335">
    <property type="term" value="P:positive regulation of cell migration"/>
    <property type="evidence" value="ECO:0000315"/>
    <property type="project" value="UniProtKB"/>
</dbReference>
<dbReference type="GO" id="GO:0008284">
    <property type="term" value="P:positive regulation of cell population proliferation"/>
    <property type="evidence" value="ECO:0000315"/>
    <property type="project" value="UniProtKB"/>
</dbReference>
<dbReference type="GO" id="GO:2000670">
    <property type="term" value="P:positive regulation of dendritic cell apoptotic process"/>
    <property type="evidence" value="ECO:0000315"/>
    <property type="project" value="UniProtKB"/>
</dbReference>
<dbReference type="GO" id="GO:0060369">
    <property type="term" value="P:positive regulation of Fc receptor mediated stimulatory signaling pathway"/>
    <property type="evidence" value="ECO:0007669"/>
    <property type="project" value="Ensembl"/>
</dbReference>
<dbReference type="GO" id="GO:0060252">
    <property type="term" value="P:positive regulation of glial cell proliferation"/>
    <property type="evidence" value="ECO:0007669"/>
    <property type="project" value="Ensembl"/>
</dbReference>
<dbReference type="GO" id="GO:0043410">
    <property type="term" value="P:positive regulation of MAPK cascade"/>
    <property type="evidence" value="ECO:0007669"/>
    <property type="project" value="Ensembl"/>
</dbReference>
<dbReference type="GO" id="GO:0070668">
    <property type="term" value="P:positive regulation of mast cell proliferation"/>
    <property type="evidence" value="ECO:0007669"/>
    <property type="project" value="Ensembl"/>
</dbReference>
<dbReference type="GO" id="GO:0010976">
    <property type="term" value="P:positive regulation of neuron projection development"/>
    <property type="evidence" value="ECO:0007669"/>
    <property type="project" value="Ensembl"/>
</dbReference>
<dbReference type="GO" id="GO:0070447">
    <property type="term" value="P:positive regulation of oligodendrocyte progenitor proliferation"/>
    <property type="evidence" value="ECO:0007669"/>
    <property type="project" value="Ensembl"/>
</dbReference>
<dbReference type="GO" id="GO:0042327">
    <property type="term" value="P:positive regulation of phosphorylation"/>
    <property type="evidence" value="ECO:0007669"/>
    <property type="project" value="Ensembl"/>
</dbReference>
<dbReference type="GO" id="GO:0046777">
    <property type="term" value="P:protein autophosphorylation"/>
    <property type="evidence" value="ECO:0000314"/>
    <property type="project" value="UniProtKB"/>
</dbReference>
<dbReference type="GO" id="GO:0002902">
    <property type="term" value="P:regulation of B cell apoptotic process"/>
    <property type="evidence" value="ECO:0000315"/>
    <property type="project" value="UniProtKB"/>
</dbReference>
<dbReference type="GO" id="GO:0050855">
    <property type="term" value="P:regulation of B cell receptor signaling pathway"/>
    <property type="evidence" value="ECO:0000315"/>
    <property type="project" value="UniProtKB"/>
</dbReference>
<dbReference type="GO" id="GO:0033628">
    <property type="term" value="P:regulation of cell adhesion mediated by integrin"/>
    <property type="evidence" value="ECO:0007669"/>
    <property type="project" value="Ensembl"/>
</dbReference>
<dbReference type="GO" id="GO:0001817">
    <property type="term" value="P:regulation of cytokine production"/>
    <property type="evidence" value="ECO:0000315"/>
    <property type="project" value="UniProtKB"/>
</dbReference>
<dbReference type="GO" id="GO:0070372">
    <property type="term" value="P:regulation of ERK1 and ERK2 cascade"/>
    <property type="evidence" value="ECO:0000315"/>
    <property type="project" value="UniProtKB"/>
</dbReference>
<dbReference type="GO" id="GO:0045646">
    <property type="term" value="P:regulation of erythrocyte differentiation"/>
    <property type="evidence" value="ECO:0000315"/>
    <property type="project" value="UniProtKB"/>
</dbReference>
<dbReference type="GO" id="GO:0050727">
    <property type="term" value="P:regulation of inflammatory response"/>
    <property type="evidence" value="ECO:0000315"/>
    <property type="project" value="UniProtKB"/>
</dbReference>
<dbReference type="GO" id="GO:0033003">
    <property type="term" value="P:regulation of mast cell activation"/>
    <property type="evidence" value="ECO:0000315"/>
    <property type="project" value="UniProtKB"/>
</dbReference>
<dbReference type="GO" id="GO:0043304">
    <property type="term" value="P:regulation of mast cell degranulation"/>
    <property type="evidence" value="ECO:0000315"/>
    <property type="project" value="UniProtKB"/>
</dbReference>
<dbReference type="GO" id="GO:0090025">
    <property type="term" value="P:regulation of monocyte chemotaxis"/>
    <property type="evidence" value="ECO:0007669"/>
    <property type="project" value="Ensembl"/>
</dbReference>
<dbReference type="GO" id="GO:0090330">
    <property type="term" value="P:regulation of platelet aggregation"/>
    <property type="evidence" value="ECO:0000315"/>
    <property type="project" value="UniProtKB"/>
</dbReference>
<dbReference type="GO" id="GO:0051279">
    <property type="term" value="P:regulation of release of sequestered calcium ion into cytosol"/>
    <property type="evidence" value="ECO:0000316"/>
    <property type="project" value="MGI"/>
</dbReference>
<dbReference type="GO" id="GO:0043200">
    <property type="term" value="P:response to amino acid"/>
    <property type="evidence" value="ECO:0007669"/>
    <property type="project" value="Ensembl"/>
</dbReference>
<dbReference type="GO" id="GO:0048678">
    <property type="term" value="P:response to axon injury"/>
    <property type="evidence" value="ECO:0007669"/>
    <property type="project" value="Ensembl"/>
</dbReference>
<dbReference type="GO" id="GO:0009743">
    <property type="term" value="P:response to carbohydrate"/>
    <property type="evidence" value="ECO:0007669"/>
    <property type="project" value="Ensembl"/>
</dbReference>
<dbReference type="GO" id="GO:0009725">
    <property type="term" value="P:response to hormone"/>
    <property type="evidence" value="ECO:0000314"/>
    <property type="project" value="UniProtKB"/>
</dbReference>
<dbReference type="GO" id="GO:0032868">
    <property type="term" value="P:response to insulin"/>
    <property type="evidence" value="ECO:0007669"/>
    <property type="project" value="Ensembl"/>
</dbReference>
<dbReference type="GO" id="GO:0006991">
    <property type="term" value="P:response to sterol depletion"/>
    <property type="evidence" value="ECO:0007669"/>
    <property type="project" value="Ensembl"/>
</dbReference>
<dbReference type="GO" id="GO:0009636">
    <property type="term" value="P:response to toxic substance"/>
    <property type="evidence" value="ECO:0007669"/>
    <property type="project" value="Ensembl"/>
</dbReference>
<dbReference type="GO" id="GO:0009410">
    <property type="term" value="P:response to xenobiotic stimulus"/>
    <property type="evidence" value="ECO:0007669"/>
    <property type="project" value="Ensembl"/>
</dbReference>
<dbReference type="GO" id="GO:0002513">
    <property type="term" value="P:tolerance induction to self antigen"/>
    <property type="evidence" value="ECO:0000315"/>
    <property type="project" value="UniProtKB"/>
</dbReference>
<dbReference type="GO" id="GO:0034142">
    <property type="term" value="P:toll-like receptor 4 signaling pathway"/>
    <property type="evidence" value="ECO:0000315"/>
    <property type="project" value="UniProtKB"/>
</dbReference>
<dbReference type="CDD" id="cd05072">
    <property type="entry name" value="PTKc_Lyn"/>
    <property type="match status" value="1"/>
</dbReference>
<dbReference type="CDD" id="cd10364">
    <property type="entry name" value="SH2_Src_Lyn"/>
    <property type="match status" value="1"/>
</dbReference>
<dbReference type="CDD" id="cd12004">
    <property type="entry name" value="SH3_Lyn"/>
    <property type="match status" value="1"/>
</dbReference>
<dbReference type="FunFam" id="1.10.510.10:FF:000553">
    <property type="entry name" value="Tyrosine-protein kinase"/>
    <property type="match status" value="1"/>
</dbReference>
<dbReference type="FunFam" id="2.30.30.40:FF:000095">
    <property type="entry name" value="Tyrosine-protein kinase"/>
    <property type="match status" value="1"/>
</dbReference>
<dbReference type="FunFam" id="3.30.200.20:FF:000036">
    <property type="entry name" value="Tyrosine-protein kinase"/>
    <property type="match status" value="1"/>
</dbReference>
<dbReference type="FunFam" id="3.30.505.10:FF:000010">
    <property type="entry name" value="Tyrosine-protein kinase"/>
    <property type="match status" value="1"/>
</dbReference>
<dbReference type="Gene3D" id="3.30.200.20">
    <property type="entry name" value="Phosphorylase Kinase, domain 1"/>
    <property type="match status" value="1"/>
</dbReference>
<dbReference type="Gene3D" id="3.30.505.10">
    <property type="entry name" value="SH2 domain"/>
    <property type="match status" value="1"/>
</dbReference>
<dbReference type="Gene3D" id="2.30.30.40">
    <property type="entry name" value="SH3 Domains"/>
    <property type="match status" value="1"/>
</dbReference>
<dbReference type="Gene3D" id="1.10.510.10">
    <property type="entry name" value="Transferase(Phosphotransferase) domain 1"/>
    <property type="match status" value="1"/>
</dbReference>
<dbReference type="InterPro" id="IPR011009">
    <property type="entry name" value="Kinase-like_dom_sf"/>
</dbReference>
<dbReference type="InterPro" id="IPR035852">
    <property type="entry name" value="Lyn_SH2"/>
</dbReference>
<dbReference type="InterPro" id="IPR035748">
    <property type="entry name" value="Lyn_SH3"/>
</dbReference>
<dbReference type="InterPro" id="IPR050198">
    <property type="entry name" value="Non-receptor_tyrosine_kinases"/>
</dbReference>
<dbReference type="InterPro" id="IPR000719">
    <property type="entry name" value="Prot_kinase_dom"/>
</dbReference>
<dbReference type="InterPro" id="IPR017441">
    <property type="entry name" value="Protein_kinase_ATP_BS"/>
</dbReference>
<dbReference type="InterPro" id="IPR001245">
    <property type="entry name" value="Ser-Thr/Tyr_kinase_cat_dom"/>
</dbReference>
<dbReference type="InterPro" id="IPR000980">
    <property type="entry name" value="SH2"/>
</dbReference>
<dbReference type="InterPro" id="IPR036860">
    <property type="entry name" value="SH2_dom_sf"/>
</dbReference>
<dbReference type="InterPro" id="IPR036028">
    <property type="entry name" value="SH3-like_dom_sf"/>
</dbReference>
<dbReference type="InterPro" id="IPR001452">
    <property type="entry name" value="SH3_domain"/>
</dbReference>
<dbReference type="InterPro" id="IPR008266">
    <property type="entry name" value="Tyr_kinase_AS"/>
</dbReference>
<dbReference type="InterPro" id="IPR020635">
    <property type="entry name" value="Tyr_kinase_cat_dom"/>
</dbReference>
<dbReference type="PANTHER" id="PTHR24418">
    <property type="entry name" value="TYROSINE-PROTEIN KINASE"/>
    <property type="match status" value="1"/>
</dbReference>
<dbReference type="Pfam" id="PF07714">
    <property type="entry name" value="PK_Tyr_Ser-Thr"/>
    <property type="match status" value="1"/>
</dbReference>
<dbReference type="Pfam" id="PF00017">
    <property type="entry name" value="SH2"/>
    <property type="match status" value="1"/>
</dbReference>
<dbReference type="Pfam" id="PF00018">
    <property type="entry name" value="SH3_1"/>
    <property type="match status" value="1"/>
</dbReference>
<dbReference type="PRINTS" id="PR00401">
    <property type="entry name" value="SH2DOMAIN"/>
</dbReference>
<dbReference type="PRINTS" id="PR00452">
    <property type="entry name" value="SH3DOMAIN"/>
</dbReference>
<dbReference type="PRINTS" id="PR00109">
    <property type="entry name" value="TYRKINASE"/>
</dbReference>
<dbReference type="SMART" id="SM00252">
    <property type="entry name" value="SH2"/>
    <property type="match status" value="1"/>
</dbReference>
<dbReference type="SMART" id="SM00326">
    <property type="entry name" value="SH3"/>
    <property type="match status" value="1"/>
</dbReference>
<dbReference type="SMART" id="SM00219">
    <property type="entry name" value="TyrKc"/>
    <property type="match status" value="1"/>
</dbReference>
<dbReference type="SUPFAM" id="SSF56112">
    <property type="entry name" value="Protein kinase-like (PK-like)"/>
    <property type="match status" value="1"/>
</dbReference>
<dbReference type="SUPFAM" id="SSF55550">
    <property type="entry name" value="SH2 domain"/>
    <property type="match status" value="1"/>
</dbReference>
<dbReference type="SUPFAM" id="SSF50044">
    <property type="entry name" value="SH3-domain"/>
    <property type="match status" value="1"/>
</dbReference>
<dbReference type="PROSITE" id="PS00107">
    <property type="entry name" value="PROTEIN_KINASE_ATP"/>
    <property type="match status" value="1"/>
</dbReference>
<dbReference type="PROSITE" id="PS50011">
    <property type="entry name" value="PROTEIN_KINASE_DOM"/>
    <property type="match status" value="1"/>
</dbReference>
<dbReference type="PROSITE" id="PS00109">
    <property type="entry name" value="PROTEIN_KINASE_TYR"/>
    <property type="match status" value="1"/>
</dbReference>
<dbReference type="PROSITE" id="PS50001">
    <property type="entry name" value="SH2"/>
    <property type="match status" value="1"/>
</dbReference>
<dbReference type="PROSITE" id="PS50002">
    <property type="entry name" value="SH3"/>
    <property type="match status" value="1"/>
</dbReference>
<evidence type="ECO:0000250" key="1"/>
<evidence type="ECO:0000250" key="2">
    <source>
        <dbReference type="UniProtKB" id="P07948"/>
    </source>
</evidence>
<evidence type="ECO:0000255" key="3">
    <source>
        <dbReference type="PROSITE-ProRule" id="PRU00159"/>
    </source>
</evidence>
<evidence type="ECO:0000255" key="4">
    <source>
        <dbReference type="PROSITE-ProRule" id="PRU00191"/>
    </source>
</evidence>
<evidence type="ECO:0000255" key="5">
    <source>
        <dbReference type="PROSITE-ProRule" id="PRU00192"/>
    </source>
</evidence>
<evidence type="ECO:0000255" key="6">
    <source>
        <dbReference type="PROSITE-ProRule" id="PRU10028"/>
    </source>
</evidence>
<evidence type="ECO:0000256" key="7">
    <source>
        <dbReference type="SAM" id="MobiDB-lite"/>
    </source>
</evidence>
<evidence type="ECO:0000269" key="8">
    <source>
    </source>
</evidence>
<evidence type="ECO:0000269" key="9">
    <source>
    </source>
</evidence>
<evidence type="ECO:0000269" key="10">
    <source>
    </source>
</evidence>
<evidence type="ECO:0000269" key="11">
    <source>
    </source>
</evidence>
<evidence type="ECO:0000269" key="12">
    <source>
    </source>
</evidence>
<evidence type="ECO:0000269" key="13">
    <source>
    </source>
</evidence>
<evidence type="ECO:0000269" key="14">
    <source>
    </source>
</evidence>
<evidence type="ECO:0000269" key="15">
    <source>
    </source>
</evidence>
<evidence type="ECO:0000269" key="16">
    <source>
    </source>
</evidence>
<evidence type="ECO:0000269" key="17">
    <source>
    </source>
</evidence>
<evidence type="ECO:0000269" key="18">
    <source>
    </source>
</evidence>
<evidence type="ECO:0000269" key="19">
    <source>
    </source>
</evidence>
<evidence type="ECO:0000269" key="20">
    <source>
    </source>
</evidence>
<evidence type="ECO:0000269" key="21">
    <source>
    </source>
</evidence>
<evidence type="ECO:0000269" key="22">
    <source>
    </source>
</evidence>
<evidence type="ECO:0000269" key="23">
    <source>
    </source>
</evidence>
<evidence type="ECO:0000269" key="24">
    <source>
    </source>
</evidence>
<evidence type="ECO:0000269" key="25">
    <source>
    </source>
</evidence>
<evidence type="ECO:0000269" key="26">
    <source>
    </source>
</evidence>
<evidence type="ECO:0000269" key="27">
    <source>
    </source>
</evidence>
<evidence type="ECO:0000269" key="28">
    <source>
    </source>
</evidence>
<evidence type="ECO:0000269" key="29">
    <source>
    </source>
</evidence>
<evidence type="ECO:0000269" key="30">
    <source>
    </source>
</evidence>
<evidence type="ECO:0000269" key="31">
    <source>
    </source>
</evidence>
<evidence type="ECO:0000269" key="32">
    <source>
    </source>
</evidence>
<evidence type="ECO:0000269" key="33">
    <source>
    </source>
</evidence>
<evidence type="ECO:0000269" key="34">
    <source>
    </source>
</evidence>
<evidence type="ECO:0000269" key="35">
    <source>
    </source>
</evidence>
<evidence type="ECO:0000269" key="36">
    <source>
    </source>
</evidence>
<evidence type="ECO:0000269" key="37">
    <source>
    </source>
</evidence>
<evidence type="ECO:0000269" key="38">
    <source>
    </source>
</evidence>
<evidence type="ECO:0000269" key="39">
    <source>
    </source>
</evidence>
<evidence type="ECO:0000269" key="40">
    <source>
    </source>
</evidence>
<evidence type="ECO:0000269" key="41">
    <source>
    </source>
</evidence>
<evidence type="ECO:0000269" key="42">
    <source>
    </source>
</evidence>
<evidence type="ECO:0000269" key="43">
    <source>
    </source>
</evidence>
<evidence type="ECO:0000269" key="44">
    <source>
    </source>
</evidence>
<evidence type="ECO:0000269" key="45">
    <source>
    </source>
</evidence>
<evidence type="ECO:0000269" key="46">
    <source>
    </source>
</evidence>
<evidence type="ECO:0000269" key="47">
    <source>
    </source>
</evidence>
<evidence type="ECO:0000269" key="48">
    <source>
    </source>
</evidence>
<evidence type="ECO:0000269" key="49">
    <source>
    </source>
</evidence>
<evidence type="ECO:0000269" key="50">
    <source>
    </source>
</evidence>
<evidence type="ECO:0000269" key="51">
    <source>
    </source>
</evidence>
<evidence type="ECO:0000269" key="52">
    <source>
    </source>
</evidence>
<evidence type="ECO:0000269" key="53">
    <source>
    </source>
</evidence>
<evidence type="ECO:0000269" key="54">
    <source>
    </source>
</evidence>
<evidence type="ECO:0000269" key="55">
    <source>
    </source>
</evidence>
<evidence type="ECO:0000269" key="56">
    <source>
    </source>
</evidence>
<evidence type="ECO:0000269" key="57">
    <source>
    </source>
</evidence>
<evidence type="ECO:0000269" key="58">
    <source>
    </source>
</evidence>
<evidence type="ECO:0000269" key="59">
    <source>
    </source>
</evidence>
<evidence type="ECO:0000269" key="60">
    <source>
    </source>
</evidence>
<evidence type="ECO:0000303" key="61">
    <source>
    </source>
</evidence>
<evidence type="ECO:0000305" key="62"/>
<evidence type="ECO:0007744" key="63">
    <source>
    </source>
</evidence>
<evidence type="ECO:0007744" key="64">
    <source>
    </source>
</evidence>
<evidence type="ECO:0007744" key="65">
    <source>
    </source>
</evidence>
<evidence type="ECO:0007829" key="66">
    <source>
        <dbReference type="PDB" id="2ZV7"/>
    </source>
</evidence>
<evidence type="ECO:0007829" key="67">
    <source>
        <dbReference type="PDB" id="4TZI"/>
    </source>
</evidence>
<name>LYN_MOUSE</name>
<feature type="initiator methionine" description="Removed" evidence="2">
    <location>
        <position position="1"/>
    </location>
</feature>
<feature type="chain" id="PRO_0000088130" description="Tyrosine-protein kinase Lyn">
    <location>
        <begin position="2"/>
        <end position="512"/>
    </location>
</feature>
<feature type="domain" description="SH3" evidence="5">
    <location>
        <begin position="63"/>
        <end position="123"/>
    </location>
</feature>
<feature type="domain" description="SH2" evidence="4">
    <location>
        <begin position="129"/>
        <end position="226"/>
    </location>
</feature>
<feature type="domain" description="Protein kinase" evidence="3">
    <location>
        <begin position="247"/>
        <end position="501"/>
    </location>
</feature>
<feature type="region of interest" description="Disordered" evidence="7">
    <location>
        <begin position="1"/>
        <end position="45"/>
    </location>
</feature>
<feature type="active site" description="Proton acceptor" evidence="3 6">
    <location>
        <position position="367"/>
    </location>
</feature>
<feature type="binding site" evidence="62">
    <location>
        <begin position="253"/>
        <end position="261"/>
    </location>
    <ligand>
        <name>ATP</name>
        <dbReference type="ChEBI" id="CHEBI:30616"/>
    </ligand>
</feature>
<feature type="binding site" evidence="62">
    <location>
        <position position="275"/>
    </location>
    <ligand>
        <name>ATP</name>
        <dbReference type="ChEBI" id="CHEBI:30616"/>
    </ligand>
</feature>
<feature type="modified residue" description="Phosphoserine" evidence="64">
    <location>
        <position position="19"/>
    </location>
</feature>
<feature type="modified residue" description="Phosphotyrosine" evidence="2">
    <location>
        <position position="193"/>
    </location>
</feature>
<feature type="modified residue" description="Phosphoserine" evidence="2">
    <location>
        <position position="228"/>
    </location>
</feature>
<feature type="modified residue" description="Phosphotyrosine" evidence="2">
    <location>
        <position position="306"/>
    </location>
</feature>
<feature type="modified residue" description="Phosphotyrosine" evidence="2">
    <location>
        <position position="316"/>
    </location>
</feature>
<feature type="modified residue" description="Phosphotyrosine; by autocatalysis" evidence="9 28 64 65">
    <location>
        <position position="397"/>
    </location>
</feature>
<feature type="modified residue" description="Phosphotyrosine" evidence="2">
    <location>
        <position position="460"/>
    </location>
</feature>
<feature type="modified residue" description="Phosphotyrosine" evidence="2">
    <location>
        <position position="473"/>
    </location>
</feature>
<feature type="modified residue" description="Phosphotyrosine; by autocatalysis, CSK and MATK" evidence="9 63 64">
    <location>
        <position position="508"/>
    </location>
</feature>
<feature type="lipid moiety-binding region" description="N-myristoyl glycine" evidence="2">
    <location>
        <position position="2"/>
    </location>
</feature>
<feature type="lipid moiety-binding region" description="S-palmitoyl cysteine" evidence="1">
    <location>
        <position position="3"/>
    </location>
</feature>
<feature type="splice variant" id="VSP_005003" description="In isoform 2." evidence="61">
    <location>
        <begin position="25"/>
        <end position="45"/>
    </location>
</feature>
<feature type="mutagenesis site" description="Abolishes autoinhibition, leading to increased kinase activity and constitutive phosphorylation of LYN substrates." evidence="16 18">
    <original>Y</original>
    <variation>F</variation>
    <location>
        <position position="508"/>
    </location>
</feature>
<feature type="sequence conflict" description="In Ref. 2; AAA39471/AAA39472." evidence="62" ref="2">
    <original>I</original>
    <variation>F</variation>
    <location>
        <position position="77"/>
    </location>
</feature>
<feature type="sequence conflict" description="In Ref. 2; AAA39471/AAA39472." evidence="62" ref="2">
    <original>L</original>
    <variation>I</variation>
    <location>
        <position position="161"/>
    </location>
</feature>
<feature type="sequence conflict" description="In Ref. 2; AAA39471/AAA39472." evidence="62" ref="2">
    <original>P</original>
    <variation>L</variation>
    <location>
        <position position="279"/>
    </location>
</feature>
<feature type="sequence conflict" description="In Ref. 2; AAA39471/AAA39472." evidence="62" ref="2">
    <original>V</original>
    <variation>I</variation>
    <location>
        <position position="391"/>
    </location>
</feature>
<feature type="sequence conflict" description="In Ref. 4; AAA40017." evidence="62" ref="4">
    <original>I</original>
    <variation>F</variation>
    <location>
        <position position="415"/>
    </location>
</feature>
<feature type="sequence conflict" description="In Ref. 1; AAA39470." evidence="62" ref="1">
    <original>D</original>
    <variation>N</variation>
    <location>
        <position position="425"/>
    </location>
</feature>
<feature type="sequence conflict" description="In Ref. 4; AAA40017." evidence="62" ref="4">
    <original>L</original>
    <variation>P</variation>
    <location>
        <position position="432"/>
    </location>
</feature>
<feature type="helix" evidence="67">
    <location>
        <begin position="136"/>
        <end position="143"/>
    </location>
</feature>
<feature type="strand" evidence="67">
    <location>
        <begin position="153"/>
        <end position="157"/>
    </location>
</feature>
<feature type="strand" evidence="67">
    <location>
        <begin position="159"/>
        <end position="161"/>
    </location>
</feature>
<feature type="strand" evidence="67">
    <location>
        <begin position="165"/>
        <end position="172"/>
    </location>
</feature>
<feature type="strand" evidence="67">
    <location>
        <begin position="174"/>
        <end position="187"/>
    </location>
</feature>
<feature type="strand" evidence="67">
    <location>
        <begin position="193"/>
        <end position="196"/>
    </location>
</feature>
<feature type="strand" evidence="67">
    <location>
        <begin position="199"/>
        <end position="203"/>
    </location>
</feature>
<feature type="helix" evidence="67">
    <location>
        <begin position="204"/>
        <end position="213"/>
    </location>
</feature>
<feature type="strand" evidence="67">
    <location>
        <begin position="218"/>
        <end position="220"/>
    </location>
</feature>
<feature type="helix" evidence="66">
    <location>
        <begin position="244"/>
        <end position="246"/>
    </location>
</feature>
<feature type="strand" evidence="66">
    <location>
        <begin position="247"/>
        <end position="254"/>
    </location>
</feature>
<feature type="strand" evidence="66">
    <location>
        <begin position="257"/>
        <end position="266"/>
    </location>
</feature>
<feature type="turn" evidence="66">
    <location>
        <begin position="267"/>
        <end position="269"/>
    </location>
</feature>
<feature type="strand" evidence="66">
    <location>
        <begin position="270"/>
        <end position="277"/>
    </location>
</feature>
<feature type="helix" evidence="66">
    <location>
        <begin position="284"/>
        <end position="294"/>
    </location>
</feature>
<feature type="strand" evidence="66">
    <location>
        <begin position="305"/>
        <end position="309"/>
    </location>
</feature>
<feature type="strand" evidence="66">
    <location>
        <begin position="311"/>
        <end position="314"/>
    </location>
</feature>
<feature type="strand" evidence="66">
    <location>
        <begin position="316"/>
        <end position="320"/>
    </location>
</feature>
<feature type="helix" evidence="66">
    <location>
        <begin position="327"/>
        <end position="332"/>
    </location>
</feature>
<feature type="helix" evidence="66">
    <location>
        <begin position="336"/>
        <end position="338"/>
    </location>
</feature>
<feature type="helix" evidence="66">
    <location>
        <begin position="341"/>
        <end position="360"/>
    </location>
</feature>
<feature type="helix" evidence="66">
    <location>
        <begin position="370"/>
        <end position="372"/>
    </location>
</feature>
<feature type="strand" evidence="66">
    <location>
        <begin position="373"/>
        <end position="375"/>
    </location>
</feature>
<feature type="strand" evidence="66">
    <location>
        <begin position="381"/>
        <end position="383"/>
    </location>
</feature>
<feature type="helix" evidence="66">
    <location>
        <begin position="407"/>
        <end position="409"/>
    </location>
</feature>
<feature type="helix" evidence="66">
    <location>
        <begin position="412"/>
        <end position="417"/>
    </location>
</feature>
<feature type="helix" evidence="66">
    <location>
        <begin position="422"/>
        <end position="438"/>
    </location>
</feature>
<feature type="helix" evidence="66">
    <location>
        <begin position="449"/>
        <end position="455"/>
    </location>
</feature>
<feature type="helix" evidence="66">
    <location>
        <begin position="456"/>
        <end position="458"/>
    </location>
</feature>
<feature type="helix" evidence="66">
    <location>
        <begin position="470"/>
        <end position="479"/>
    </location>
</feature>
<feature type="helix" evidence="66">
    <location>
        <begin position="484"/>
        <end position="486"/>
    </location>
</feature>
<feature type="helix" evidence="66">
    <location>
        <begin position="490"/>
        <end position="498"/>
    </location>
</feature>
<proteinExistence type="evidence at protein level"/>
<comment type="function">
    <text evidence="2 8 10 11 12 13 14 16 17 19 20 21 22 24 25 26 27 28 30 33 36 38 39 42 43 44 45 47 50 51 52 53 54 55 56 57 58 59 60">Non-receptor tyrosine-protein kinase that transmits signals from cell surface receptors and plays an important role in the regulation of innate and adaptive immune responses, hematopoiesis, responses to growth factors and cytokines, integrin signaling, but also responses to DNA damage and genotoxic agents. Functions primarily as negative regulator, but can also function as activator, depending on the context. Required for the initiation of the B-cell response, but also for its down-regulation and termination. Plays an important role in the regulation of B-cell differentiation, proliferation, survival and apoptosis, and is important for immune self-tolerance. Acts downstream of several immune receptors, including the B-cell receptor, CD79A, CD79B, CD5, CD19, CD22, FCER1, FCGR2, FCGR1A, TLR2 and TLR4. Plays a role in the inflammatory response to bacterial lipopolysaccharide. Mediates the responses to cytokines and growth factors in hematopoietic progenitors, platelets, erythrocytes, and in mature myeloid cells, such as dendritic cells, neutrophils and eosinophils. Acts downstream of EPOR, KIT, MPL, the chemokine receptor CXCR4, as well as the receptors for IL3, IL5 and CSF2. Plays an important role in integrin signaling. Regulates cell proliferation, survival, differentiation, migration, adhesion, degranulation, and cytokine release. Involved in the regulation of endothelial activation, neutrophil adhesion and transendothelial migration (By similarity). Down-regulates signaling pathways by phosphorylation of immunoreceptor tyrosine-based inhibitory motifs (ITIM), that then serve as binding sites for phosphatases, such as PTPN6/SHP-1, PTPN11/SHP-2 and INPP5D/SHIP-1, that modulate signaling by dephosphorylation of kinases and their substrates. Phosphorylates LIME1 in response to CD22 activation. Phosphorylates BTK, CBL, CD5, CD19, CD72, CD79A, CD79B, CSF2RB, DOK1, HCLS1, MS4A2/FCER1B, SYK and TEC. Phosphorylates PIRB at Tyr-794 and Tyr-824, which is required for PIRB interaction with PTPN6/SHP-1 and PTPN11/SHP-2 (PubMed:10327049). Promotes phosphorylation of SIRPA, PTPN6/SHP-1, PTPN11/SHP-2 and INPP5D/SHIP-1. Required for rapid phosphorylation of FER in response to FCER1 activation. Mediates KIT phosphorylation. Acts as an effector of EPOR (erythropoietin receptor) in controlling KIT expression and may play a role in erythroid differentiation during the switch between proliferation and maturation. Depending on the context, activates or inhibits several signaling cascades. Regulates phosphatidylinositol 3-kinase activity and AKT1 activation. Regulates activation of the MAP kinase signaling cascade, including activation of MAP2K1/MEK1, MAPK1/ERK2, MAPK3/ERK1, MAPK8/JNK1 and MAPK9/JNK2. Mediates activation of STAT5A and/or STAT5B. Phosphorylates LPXN on 'Tyr-72'. Kinase activity facilitates TLR4-TLR6 heterodimerization and signal initiation. Phosphorylates SCIMP on 'Tyr-96'; this enhances binding of SCIMP to TLR4, promoting the phosphorylation of TLR4, and a selective cytokine response to lipopolysaccharide in macrophages (PubMed:28098138). Phosphorylates CLNK (PubMed:12681493). Phosphorylates BCAR1/CAS and NEDD9/HEF1 (By similarity).</text>
</comment>
<comment type="catalytic activity">
    <reaction evidence="6 18 34 37 49">
        <text>L-tyrosyl-[protein] + ATP = O-phospho-L-tyrosyl-[protein] + ADP + H(+)</text>
        <dbReference type="Rhea" id="RHEA:10596"/>
        <dbReference type="Rhea" id="RHEA-COMP:10136"/>
        <dbReference type="Rhea" id="RHEA-COMP:20101"/>
        <dbReference type="ChEBI" id="CHEBI:15378"/>
        <dbReference type="ChEBI" id="CHEBI:30616"/>
        <dbReference type="ChEBI" id="CHEBI:46858"/>
        <dbReference type="ChEBI" id="CHEBI:61978"/>
        <dbReference type="ChEBI" id="CHEBI:456216"/>
        <dbReference type="EC" id="2.7.10.2"/>
    </reaction>
</comment>
<comment type="activity regulation">
    <text evidence="9 18 34 49">Subject to autoinhibition, mediated by intramolecular interactions between the SH2 domain and the C-terminal phosphotyrosine. Phosphorylation at Tyr-397 is required for optimal activity. Phosphorylated by CSK at Tyr-508; phosphorylation at Tyr-508 inhibits kinase activity. Kinase activity is modulated by dephosphorylation by PTPRC/CD45. Inhibited by dasatinib, PP2, and SU6656.</text>
</comment>
<comment type="subunit">
    <text evidence="2 12 15 19 24 27 28 29 31 32 33 35 40 41 42 46 47 48 50 55 58">Interacts with TEC. Interacts (via SH2 domain) with FLT3 (tyrosine phosphorylated). Interacts with LIME1 and with CD79A upon activation of the B-cell antigen receptor. Interacts with the B-cell receptor complex. Interacts with phosphorylated THEMIS2. Interacts with EPOR. Interacts with MS4A2/FCER1B. Interaction (via the SH2 and SH3 domains) with MUC1 is stimulated by IL7 and the subsequent phosphorylation increases the binding between MUC1 and CTNNB1/beta-catenin. Interacts with ADAM15. Interacts with NDFIP2 and more weakly with NDFIP1. Interacts with FASLG. Interacts with KIT. Interacts with HCLS1. Interacts with FCGR2B. Interacts with FCGR1A; the interaction may be indirect. Interacts with CD19, CD22, CD79A and CD79B. Interacts (via SH3 domain) with CBLC, PPP1R15A and PDE4A. Interacts with TGFB1I1. Interacts (via SH3 domain) with PIK3R1, the regulatory subunit of phosphatidylinositol 3-kinase; this interaction enhances phosphatidylinositol 3-kinase activity. Interacts with CSF2RB, the common subunit of the IL3, IL5 and CSF2 receptors. Interacts with PAG1; identified in a complex with PAG1 and STAT3. Interacts with ABL1. Interacts with PTPN6/SHP-1. Interacts (via SH3 domain) with SCIMP (via proline-rich region) (PubMed:28098138). This interaction facilitates the phosphorylation of SCIMP on 'Tyr-96', which enhances binding of SCIMP to TLR4, and consequently the phosphorylation of TLR4 in response to stimulation by lipopolysaccharide in macrophages (PubMed:28098138). Interacts with LPXN (via LD motif 3) and the interaction is induced upon B-cell antigen receptor (BCR) activation. Interacts (via SH3-domain) with ANKRD54 (via ankyrin repeat region) in an activation-independent status of LYN. Forms a multiprotein complex with ANKRD54 and HCLS1. Interacts (via SH2 and SH3 domains) with UNC119; leading to LYN activation (By similarity). Interacts with CD36. Interacts with LYN (PubMed:22496641). Interacts with SKAP1 and FYB1; this interaction promotes the phosphorylation of CLNK (PubMed:12681493). Interacts with BCAR1/CAS and NEDD9/HEF1 (By similarity).</text>
</comment>
<comment type="interaction">
    <interactant intactId="EBI-643537">
        <id>P25911</id>
    </interactant>
    <interactant intactId="EBI-641738">
        <id>Q9Z1S8</id>
        <label>Gab2</label>
    </interactant>
    <organismsDiffer>false</organismsDiffer>
    <experiments>2</experiments>
</comment>
<comment type="interaction">
    <interactant intactId="EBI-643537">
        <id>P25911</id>
    </interactant>
    <interactant intactId="EBI-924601">
        <id>P49710</id>
        <label>Hcls1</label>
    </interactant>
    <organismsDiffer>false</organismsDiffer>
    <experiments>10</experiments>
</comment>
<comment type="interaction">
    <interactant intactId="EBI-643537">
        <id>P25911</id>
    </interactant>
    <interactant intactId="EBI-617954">
        <id>Q8CIH5</id>
        <label>Plcg2</label>
    </interactant>
    <organismsDiffer>false</organismsDiffer>
    <experiments>2</experiments>
</comment>
<comment type="subcellular location">
    <subcellularLocation>
        <location evidence="1">Cell membrane</location>
    </subcellularLocation>
    <subcellularLocation>
        <location evidence="1">Nucleus</location>
    </subcellularLocation>
    <subcellularLocation>
        <location evidence="1">Cytoplasm</location>
    </subcellularLocation>
    <subcellularLocation>
        <location evidence="1">Cytoplasm</location>
        <location evidence="1">Perinuclear region</location>
    </subcellularLocation>
    <subcellularLocation>
        <location evidence="1">Golgi apparatus</location>
    </subcellularLocation>
    <subcellularLocation>
        <location evidence="2">Membrane</location>
        <topology evidence="2">Lipid-anchor</topology>
    </subcellularLocation>
    <text evidence="1">Accumulates in the nucleus by inhibition of Crm1-mediated nuclear export. Nuclear accumulation is increased by inhibition of its kinase activity. The trafficking from the Golgi apparatus to the cell membrane occurs in a kinase domain-dependent but kinase activity independent manner and is mediated by exocytic vesicular transport (By similarity).</text>
</comment>
<comment type="alternative products">
    <event type="alternative splicing"/>
    <isoform>
        <id>P25911-1</id>
        <name>1</name>
        <name>LYN A</name>
        <name>p56</name>
        <sequence type="displayed"/>
    </isoform>
    <isoform>
        <id>P25911-2</id>
        <name>2</name>
        <name>LYN B</name>
        <name>p53</name>
        <sequence type="described" ref="VSP_005003"/>
    </isoform>
</comment>
<comment type="tissue specificity">
    <text evidence="37 42">Detected in bone marrow-derived monocytes and macrophages (at protein level) (PubMed:2017160, PubMed:28098138). Expressed predominantly in B-lymphoid and myeloid cells (PubMed:2017160).</text>
</comment>
<comment type="domain">
    <text evidence="1">The protein kinase domain plays an important role in its localization in the cell membrane.</text>
</comment>
<comment type="PTM">
    <text evidence="23">Ubiquitinated by CBL, leading to its degradation.</text>
</comment>
<comment type="PTM">
    <text evidence="2 9 28 54">Autophosphorylated (By similarity). Phosphorylated on tyrosine residues in response to KIT signaling (By similarity). Phosphorylation at Tyr-397 is required for optimal activity (PubMed:16272347). Phosphorylation at Tyr-508 inhibits kinase activity (By similarity). Phosphorylated at Tyr-508 by CSK (By similarity). Dephosphorylated by PTPRC/CD45 (PubMed:10415030). Becomes rapidly phosphorylated upon activation of the B-cell receptor and the immunoglobulin receptor FCGR1A (PubMed:9252121). Phosphorylated in response to ITGB1 in B-cells (By similarity).</text>
</comment>
<comment type="disruption phenotype">
    <text evidence="10 16 25 44 45 53 54">No visible phenotype at birth. B-cell development in the bone marrow proceeds normally, but mice have reduced numbers of peripheral B-cells, with a greater proportion of immature cells and an increased turnover rate. Dendritic cells also have a more immature phenotype. Mice develop severe asthma upon exposure to airborne antigen. Mice display elevated levels of serum IgM. Aging mice display strongly increased levels of myeloid cells, severe extramedullary hematoipoiesis and tend to develop monocyte/macrophage tumors. After about 16 weeks, mice begin to develop splenomegaly and glomerulonephritis, and display autoimmune antibodies. Their B-cells are hypersensitive to stimulation of the B-cell receptor, and display enhanced activation of the MAP kinase signaling pathway. Mice do not display an allergic response upon IgE receptor engagement.</text>
</comment>
<comment type="similarity">
    <text evidence="3">Belongs to the protein kinase superfamily. Tyr protein kinase family. SRC subfamily.</text>
</comment>
<protein>
    <recommendedName>
        <fullName>Tyrosine-protein kinase Lyn</fullName>
        <ecNumber>2.7.10.2</ecNumber>
    </recommendedName>
    <alternativeName>
        <fullName>V-yes-1 Yamaguchi sarcoma viral related oncogene homolog</fullName>
    </alternativeName>
    <alternativeName>
        <fullName>p53Lyn</fullName>
    </alternativeName>
    <alternativeName>
        <fullName>p56Lyn</fullName>
    </alternativeName>
</protein>
<organism>
    <name type="scientific">Mus musculus</name>
    <name type="common">Mouse</name>
    <dbReference type="NCBI Taxonomy" id="10090"/>
    <lineage>
        <taxon>Eukaryota</taxon>
        <taxon>Metazoa</taxon>
        <taxon>Chordata</taxon>
        <taxon>Craniata</taxon>
        <taxon>Vertebrata</taxon>
        <taxon>Euteleostomi</taxon>
        <taxon>Mammalia</taxon>
        <taxon>Eutheria</taxon>
        <taxon>Euarchontoglires</taxon>
        <taxon>Glires</taxon>
        <taxon>Rodentia</taxon>
        <taxon>Myomorpha</taxon>
        <taxon>Muroidea</taxon>
        <taxon>Muridae</taxon>
        <taxon>Murinae</taxon>
        <taxon>Mus</taxon>
        <taxon>Mus</taxon>
    </lineage>
</organism>
<sequence>MGCIKSKRKDNLNDDEVDSKTQPVRNTDRTIYVRDPTSNKQQRPVPEFHLLPGQRFQTKDPEEQGDIVVALYPYDGIHPDDLSFKKGEKMKVLEEHGEWWKAKSLSSKREGFIPSNYVAKVNTLETEEWFFKDITRKDAERQLLAPGNSAGAFLIRESETLKGSFSLSVRDYDPMHGDVIKHYKIRSLDNGGYYISPRITFPCISDMIKHYQKQSDGLCRRLEKACISPKPQKPWDKDAWEIPRESIKLVKKLGAGQFGEVWMGYYNNSTKVAVKTLKPGTMSVQAFLEEANLMKTLQHDKLVRLYAVVTKEEPIYIITEFMAKGSLLDFLKSDEGGKVLLPKLIDFSAQIAEGMAYIERKNYIHRDLRAANVLVSESLMCKIADFGLARVIEDNEYTAREGAKFPIKWTAPEAINFGCFTIKSDVWSFGILLYEIVTYGKIPYPGRTNADVMSALSQGYRMPRMENCPDELYDIMKMCWKEKAEERPTFDYLQSVLDDFYTATEGQYQQQP</sequence>